<feature type="chain" id="PRO_0000119093" description="Kelch-like ECH-associated protein 1">
    <location>
        <begin position="1"/>
        <end position="624"/>
    </location>
</feature>
<feature type="domain" description="BTB" evidence="2">
    <location>
        <begin position="77"/>
        <end position="149"/>
    </location>
</feature>
<feature type="domain" description="BACK">
    <location>
        <begin position="184"/>
        <end position="286"/>
    </location>
</feature>
<feature type="repeat" description="Kelch 1">
    <location>
        <begin position="327"/>
        <end position="372"/>
    </location>
</feature>
<feature type="repeat" description="Kelch 2">
    <location>
        <begin position="373"/>
        <end position="423"/>
    </location>
</feature>
<feature type="repeat" description="Kelch 3">
    <location>
        <begin position="424"/>
        <end position="470"/>
    </location>
</feature>
<feature type="repeat" description="Kelch 4">
    <location>
        <begin position="471"/>
        <end position="517"/>
    </location>
</feature>
<feature type="repeat" description="Kelch 5">
    <location>
        <begin position="518"/>
        <end position="564"/>
    </location>
</feature>
<feature type="repeat" description="Kelch 6">
    <location>
        <begin position="565"/>
        <end position="611"/>
    </location>
</feature>
<feature type="site" description="Sensor for electrophilic agents" evidence="17 29">
    <location>
        <position position="151"/>
    </location>
</feature>
<feature type="site" description="Sensor for electrophilic agents" evidence="29">
    <location>
        <position position="257"/>
    </location>
</feature>
<feature type="site" description="Sensor for electrophilic agents" evidence="29">
    <location>
        <position position="273"/>
    </location>
</feature>
<feature type="site" description="Sensor for electrophilic agents" evidence="29">
    <location>
        <position position="288"/>
    </location>
</feature>
<feature type="site" description="Sensor for electrophilic agents" evidence="1">
    <location>
        <position position="434"/>
    </location>
</feature>
<feature type="modified residue" description="S-(2-succinyl)cysteine" evidence="1">
    <location>
        <position position="38"/>
    </location>
</feature>
<feature type="modified residue" description="S-(2,3-dicarboxypropyl)cysteine; alternate" evidence="29">
    <location>
        <position position="151"/>
    </location>
</feature>
<feature type="modified residue" description="S-(2-succinyl)cysteine; alternate" evidence="1">
    <location>
        <position position="151"/>
    </location>
</feature>
<feature type="modified residue" description="S-nitrosocysteine; alternate" evidence="1">
    <location>
        <position position="151"/>
    </location>
</feature>
<feature type="modified residue" description="S-(2-succinyl)cysteine" evidence="1">
    <location>
        <position position="241"/>
    </location>
</feature>
<feature type="modified residue" description="S-(2,3-dicarboxypropyl)cysteine" evidence="29">
    <location>
        <position position="257"/>
    </location>
</feature>
<feature type="modified residue" description="S-(2,3-dicarboxypropyl)cysteine" evidence="29">
    <location>
        <position position="273"/>
    </location>
</feature>
<feature type="modified residue" description="S-(2,3-dicarboxypropyl)cysteine; alternate" evidence="29">
    <location>
        <position position="288"/>
    </location>
</feature>
<feature type="modified residue" description="S-(2-succinyl)cysteine; alternate" evidence="1">
    <location>
        <position position="288"/>
    </location>
</feature>
<feature type="modified residue" description="S-(2-succinyl)cysteine" evidence="1">
    <location>
        <position position="319"/>
    </location>
</feature>
<feature type="modified residue" description="S-cGMP-cysteine" evidence="1">
    <location>
        <position position="434"/>
    </location>
</feature>
<feature type="modified residue" description="S-(2-succinyl)cysteine" evidence="1">
    <location>
        <position position="613"/>
    </location>
</feature>
<feature type="cross-link" description="N5-[4-(S-L-cysteinyl)-5-methyl-1H-imidazol-2-yl]-L-ornithine (Arg-Cys) (interchain with C-151 in KEAP1)" evidence="30">
    <location>
        <position position="135"/>
    </location>
</feature>
<feature type="cross-link" description="N5-[4-(S-L-cysteinyl)-5-methyl-1H-imidazol-2-yl]-L-ornithine (Cys-Arg) (interchain with R-135 in KEAP1)" evidence="30">
    <location>
        <position position="151"/>
    </location>
</feature>
<feature type="sequence variant" id="VAR_036084" description="In a breast cancer sample; somatic mutation." evidence="13">
    <original>C</original>
    <variation>Y</variation>
    <location>
        <position position="23"/>
    </location>
</feature>
<feature type="sequence variant" id="VAR_032102" description="In a lung adenocarcinoma patient." evidence="14">
    <original>V</original>
    <variation>F</variation>
    <location>
        <position position="167"/>
    </location>
</feature>
<feature type="sequence variant" id="VAR_032103" description="In a NSCLC cell line." evidence="14">
    <original>D</original>
    <variation>H</variation>
    <location>
        <position position="236"/>
    </location>
</feature>
<feature type="sequence variant" id="VAR_032104" description="In a lung adenocarcinoma patient." evidence="14">
    <original>Q</original>
    <variation>L</variation>
    <location>
        <position position="284"/>
    </location>
</feature>
<feature type="sequence variant" id="VAR_032105" description="In a NSCLC cell line; strongly reduces interaction with NFE2L2/NRF2 and reduces repression of NFE2L2/NRF2-dependent gene expression." evidence="14">
    <original>G</original>
    <variation>C</variation>
    <location>
        <position position="333"/>
    </location>
</feature>
<feature type="sequence variant" id="VAR_032106" description="In dbSNP:rs1048289." evidence="34">
    <original>D</original>
    <variation>N</variation>
    <location>
        <position position="349"/>
    </location>
</feature>
<feature type="sequence variant" id="VAR_032107" description="In a NSCLC cell line; dbSNP:rs777308626." evidence="14">
    <original>G</original>
    <variation>S</variation>
    <location>
        <position position="350"/>
    </location>
</feature>
<feature type="sequence variant" id="VAR_032108" description="In a lung adenocarcinoma cell line; also in NSCLC cell lines; strongly reduces interaction with NFE2L2/NRF2 and reduces repression of NFE2L2/NRF2-dependent gene expression; dbSNP:rs1397945617." evidence="10">
    <original>G</original>
    <variation>C</variation>
    <location>
        <position position="364"/>
    </location>
</feature>
<feature type="sequence variant" id="VAR_032109" description="In a lung adenocarcinoma patient; somatic mutation; strongly reduces interaction with NFE2L2/NRF2 and reduces repression of NFE2L2/NRF2-dependent gene expression." evidence="10">
    <original>G</original>
    <variation>C</variation>
    <location>
        <position position="430"/>
    </location>
</feature>
<feature type="sequence variant" id="VAR_036085" description="In a breast cancer sample; somatic mutation." evidence="13">
    <original>A</original>
    <variation>V</variation>
    <location>
        <position position="522"/>
    </location>
</feature>
<feature type="mutagenesis site" description="Reduced formation of a high-molecular mass KEAP1 molecule when methylglyoxal accumulates." evidence="30">
    <original>R</original>
    <variation>A</variation>
    <location>
        <position position="15"/>
    </location>
</feature>
<feature type="mutagenesis site" description="Abolished interaction with NFE2L2/NRF2; when associated with 161-A-A-162." evidence="6">
    <original>VSIEG</original>
    <variation>ASAEA</variation>
    <location>
        <begin position="123"/>
        <end position="127"/>
    </location>
</feature>
<feature type="mutagenesis site" description="Increases ubiquitination and proteolytic degradation." evidence="5">
    <original>IEG</original>
    <variation>AAA</variation>
    <location>
        <begin position="125"/>
        <end position="127"/>
    </location>
</feature>
<feature type="mutagenesis site" description="Reduced formation of a high-molecular mass KEAP1 molecule when methylglyoxal accumulates." evidence="30">
    <original>R</original>
    <variation>A</variation>
    <location>
        <position position="135"/>
    </location>
</feature>
<feature type="mutagenesis site" description="Substitution with a small side chain that prevents covalent modification by an electrophile; promotes constitutive ubiquitination of NFE2L2/NRF2 and subsequent repression of phase 2 detoxifying enzymes. Resistance of ubiquitination of PGAM5 to inhibition by oxidative stress and sulforaphane. Impaired interaction with CUL3. Reduced formation of a high-molecular mass KEAP1 molecule when methylglyoxal accumulates." evidence="3 8 15 17 20 29 30">
    <original>C</original>
    <variation>S</variation>
    <variation>N</variation>
    <variation>D</variation>
    <variation>L</variation>
    <location>
        <position position="151"/>
    </location>
</feature>
<feature type="mutagenesis site" description="Substitution with a bulky side chain that mimicks covalent modification by an electrophile; prevents ubiquitination and degradation of NFE2L2/NRF2, leading to constitutive activation of NFE2L2/NRF2 and subsequent expression of phase 2 detoxifying enzymes." evidence="20 26">
    <original>C</original>
    <variation>W</variation>
    <variation>Y</variation>
    <location>
        <position position="151"/>
    </location>
</feature>
<feature type="mutagenesis site" description="Abolished interaction with NFE2L2/NRF2; when associated with 123-A--A-127." evidence="6">
    <original>MY</original>
    <variation>AA</variation>
    <location>
        <begin position="161"/>
        <end position="162"/>
    </location>
</feature>
<feature type="mutagenesis site" description="Increases ubiquitination and proteolytic degradation." evidence="5">
    <original>YQI</original>
    <variation>AAA</variation>
    <location>
        <begin position="162"/>
        <end position="164"/>
    </location>
</feature>
<feature type="mutagenesis site" description="Abolishes repression of NFE2L2/NRF2-dependent gene expression. Slows down degradation of NFE2L2/NRF2." evidence="3">
    <original>C</original>
    <variation>S</variation>
    <location>
        <position position="273"/>
    </location>
</feature>
<feature type="mutagenesis site" description="Abolishes repression of NFE2L2/NRF2-dependent gene expression. Slows down degradation of NFE2L2/NRF2." evidence="3">
    <original>C</original>
    <variation>S</variation>
    <location>
        <position position="288"/>
    </location>
</feature>
<feature type="mutagenesis site" description="Loss of export from nucleus; when associated with A-310." evidence="7">
    <original>L</original>
    <variation>A</variation>
    <location>
        <position position="308"/>
    </location>
</feature>
<feature type="mutagenesis site" description="Loss of export from nucleus; when associated with A-308." evidence="7">
    <original>L</original>
    <variation>A</variation>
    <location>
        <position position="310"/>
    </location>
</feature>
<feature type="mutagenesis site" description="Loss of interaction with NFE2L2/NRF2. Strongly reduces repression of NFE2L2/NRF2-dependent gene expression. Loss of interaction with PGAM5." evidence="12 15">
    <original>Y</original>
    <variation>A</variation>
    <location>
        <position position="334"/>
    </location>
</feature>
<feature type="mutagenesis site" description="Loss of interaction with NFE2L2/NRF2. Abolishes repression of NFE2L2/NRF2-dependent gene expression. Impaired interaction with SQSTM1/p62." evidence="12 21">
    <original>R</original>
    <variation>A</variation>
    <location>
        <position position="380"/>
    </location>
</feature>
<feature type="mutagenesis site" description="Loss of interaction with NFE2L2/NRF2. Strongly reduces repression of NFE2L2/NRF2-dependent gene expression. Impaired interaction with SQSTM1/p62." evidence="12 21">
    <original>N</original>
    <variation>A</variation>
    <location>
        <position position="382"/>
    </location>
</feature>
<feature type="mutagenesis site" description="Loss of interaction with NFE2L2/NRF2. Abolishes repression of NFE2L2/NRF2-dependent gene expression. Loss of interaction with PGAM5. Does not affect interaction with SQSTM1/p62." evidence="12 15 21">
    <original>R</original>
    <variation>A</variation>
    <location>
        <position position="415"/>
    </location>
</feature>
<feature type="mutagenesis site" description="Loss of interaction with NFE2L2/NRF2. Abolishes repression of NFE2L2/NRF2-dependent gene expression. Does not affect interaction with SQSTM1/p62." evidence="12 21">
    <original>H</original>
    <variation>A</variation>
    <location>
        <position position="436"/>
    </location>
</feature>
<feature type="mutagenesis site" description="Abolishes repression of NFE2L2/NRF2-dependent gene expression." evidence="12">
    <original>F</original>
    <variation>A</variation>
    <location>
        <position position="478"/>
    </location>
</feature>
<feature type="mutagenesis site" description="Loss of interaction with NFE2L2/NRF2. Abolishes repression of NFE2L2/NRF2-dependent gene expression. Loss of interaction with PGAM5. Does not affect interaction with SQSTM1/p62." evidence="12 15 21">
    <original>R</original>
    <variation>A</variation>
    <location>
        <position position="483"/>
    </location>
</feature>
<feature type="mutagenesis site" description="Loss of interaction with NFE2L2/NRF2. Strongly reduces repression of NFE2L2/NRF2-dependent gene expression. Abolishes interaction with SQSTM1/p62." evidence="12 21">
    <original>Y</original>
    <variation>A</variation>
    <location>
        <position position="525"/>
    </location>
</feature>
<feature type="mutagenesis site" description="Loss of interaction with NFE2L2/NRF2. Strongly reduces repression of NFE2L2/NRF2-dependent gene expression. Loss of interaction with PGAM5. Abolishes interaction with SQSTM1/p62." evidence="12 15 21">
    <original>Y</original>
    <variation>A</variation>
    <location>
        <position position="572"/>
    </location>
</feature>
<feature type="mutagenesis site" description="Decreases binding to PGCKA1. Increases protein half-life." evidence="32">
    <original>K</original>
    <variation>R</variation>
    <location>
        <position position="615"/>
    </location>
</feature>
<feature type="sequence conflict" description="In Ref. 4; BAG51647." evidence="38" ref="4">
    <original>N</original>
    <variation>S</variation>
    <location>
        <position position="504"/>
    </location>
</feature>
<feature type="strand" evidence="51">
    <location>
        <begin position="51"/>
        <end position="55"/>
    </location>
</feature>
<feature type="helix" evidence="49">
    <location>
        <begin position="59"/>
        <end position="72"/>
    </location>
</feature>
<feature type="strand" evidence="49">
    <location>
        <begin position="79"/>
        <end position="83"/>
    </location>
</feature>
<feature type="strand" evidence="45">
    <location>
        <begin position="86"/>
        <end position="88"/>
    </location>
</feature>
<feature type="strand" evidence="49">
    <location>
        <begin position="91"/>
        <end position="95"/>
    </location>
</feature>
<feature type="helix" evidence="49">
    <location>
        <begin position="97"/>
        <end position="103"/>
    </location>
</feature>
<feature type="helix" evidence="49">
    <location>
        <begin position="105"/>
        <end position="111"/>
    </location>
</feature>
<feature type="strand" evidence="49">
    <location>
        <begin position="113"/>
        <end position="115"/>
    </location>
</feature>
<feature type="strand" evidence="50">
    <location>
        <begin position="116"/>
        <end position="119"/>
    </location>
</feature>
<feature type="strand" evidence="49">
    <location>
        <begin position="121"/>
        <end position="125"/>
    </location>
</feature>
<feature type="helix" evidence="49">
    <location>
        <begin position="130"/>
        <end position="142"/>
    </location>
</feature>
<feature type="strand" evidence="51">
    <location>
        <begin position="143"/>
        <end position="148"/>
    </location>
</feature>
<feature type="helix" evidence="49">
    <location>
        <begin position="149"/>
        <end position="151"/>
    </location>
</feature>
<feature type="helix" evidence="49">
    <location>
        <begin position="152"/>
        <end position="161"/>
    </location>
</feature>
<feature type="helix" evidence="49">
    <location>
        <begin position="165"/>
        <end position="177"/>
    </location>
</feature>
<feature type="turn" evidence="47">
    <location>
        <begin position="181"/>
        <end position="183"/>
    </location>
</feature>
<feature type="helix" evidence="47">
    <location>
        <begin position="184"/>
        <end position="194"/>
    </location>
</feature>
<feature type="helix" evidence="47">
    <location>
        <begin position="199"/>
        <end position="202"/>
    </location>
</feature>
<feature type="strand" evidence="43">
    <location>
        <begin position="327"/>
        <end position="331"/>
    </location>
</feature>
<feature type="strand" evidence="43">
    <location>
        <begin position="334"/>
        <end position="338"/>
    </location>
</feature>
<feature type="strand" evidence="43">
    <location>
        <begin position="342"/>
        <end position="345"/>
    </location>
</feature>
<feature type="turn" evidence="43">
    <location>
        <begin position="347"/>
        <end position="349"/>
    </location>
</feature>
<feature type="strand" evidence="43">
    <location>
        <begin position="352"/>
        <end position="354"/>
    </location>
</feature>
<feature type="strand" evidence="44">
    <location>
        <begin position="362"/>
        <end position="364"/>
    </location>
</feature>
<feature type="strand" evidence="43">
    <location>
        <begin position="366"/>
        <end position="370"/>
    </location>
</feature>
<feature type="strand" evidence="43">
    <location>
        <begin position="373"/>
        <end position="377"/>
    </location>
</feature>
<feature type="strand" evidence="43">
    <location>
        <begin position="380"/>
        <end position="383"/>
    </location>
</feature>
<feature type="strand" evidence="43">
    <location>
        <begin position="386"/>
        <end position="389"/>
    </location>
</feature>
<feature type="strand" evidence="43">
    <location>
        <begin position="393"/>
        <end position="396"/>
    </location>
</feature>
<feature type="turn" evidence="43">
    <location>
        <begin position="398"/>
        <end position="400"/>
    </location>
</feature>
<feature type="strand" evidence="43">
    <location>
        <begin position="403"/>
        <end position="405"/>
    </location>
</feature>
<feature type="strand" evidence="43">
    <location>
        <begin position="417"/>
        <end position="421"/>
    </location>
</feature>
<feature type="strand" evidence="43">
    <location>
        <begin position="424"/>
        <end position="428"/>
    </location>
</feature>
<feature type="strand" evidence="43">
    <location>
        <begin position="440"/>
        <end position="444"/>
    </location>
</feature>
<feature type="turn" evidence="43">
    <location>
        <begin position="445"/>
        <end position="448"/>
    </location>
</feature>
<feature type="strand" evidence="43">
    <location>
        <begin position="449"/>
        <end position="452"/>
    </location>
</feature>
<feature type="strand" evidence="43">
    <location>
        <begin position="464"/>
        <end position="468"/>
    </location>
</feature>
<feature type="strand" evidence="43">
    <location>
        <begin position="471"/>
        <end position="475"/>
    </location>
</feature>
<feature type="strand" evidence="48">
    <location>
        <begin position="480"/>
        <end position="483"/>
    </location>
</feature>
<feature type="strand" evidence="43">
    <location>
        <begin position="487"/>
        <end position="491"/>
    </location>
</feature>
<feature type="turn" evidence="43">
    <location>
        <begin position="492"/>
        <end position="495"/>
    </location>
</feature>
<feature type="strand" evidence="43">
    <location>
        <begin position="496"/>
        <end position="499"/>
    </location>
</feature>
<feature type="strand" evidence="43">
    <location>
        <begin position="511"/>
        <end position="515"/>
    </location>
</feature>
<feature type="strand" evidence="43">
    <location>
        <begin position="518"/>
        <end position="522"/>
    </location>
</feature>
<feature type="strand" evidence="43">
    <location>
        <begin position="527"/>
        <end position="530"/>
    </location>
</feature>
<feature type="strand" evidence="43">
    <location>
        <begin position="534"/>
        <end position="538"/>
    </location>
</feature>
<feature type="turn" evidence="43">
    <location>
        <begin position="539"/>
        <end position="542"/>
    </location>
</feature>
<feature type="strand" evidence="43">
    <location>
        <begin position="543"/>
        <end position="547"/>
    </location>
</feature>
<feature type="strand" evidence="43">
    <location>
        <begin position="558"/>
        <end position="562"/>
    </location>
</feature>
<feature type="strand" evidence="43">
    <location>
        <begin position="565"/>
        <end position="569"/>
    </location>
</feature>
<feature type="strand" evidence="46">
    <location>
        <begin position="574"/>
        <end position="577"/>
    </location>
</feature>
<feature type="strand" evidence="43">
    <location>
        <begin position="580"/>
        <end position="585"/>
    </location>
</feature>
<feature type="turn" evidence="43">
    <location>
        <begin position="586"/>
        <end position="589"/>
    </location>
</feature>
<feature type="strand" evidence="43">
    <location>
        <begin position="590"/>
        <end position="596"/>
    </location>
</feature>
<feature type="strand" evidence="43">
    <location>
        <begin position="605"/>
        <end position="609"/>
    </location>
</feature>
<reference key="1">
    <citation type="submission" date="2001-03" db="EMBL/GenBank/DDBJ databases">
        <title>Human INrf2 gene structure and nucleotide sequence.</title>
        <authorList>
            <person name="Dhakshinamoorthy S."/>
            <person name="Jaiswal A.K."/>
        </authorList>
    </citation>
    <scope>NUCLEOTIDE SEQUENCE [GENOMIC DNA / MRNA]</scope>
</reference>
<reference key="2">
    <citation type="journal article" date="1995" name="DNA Res.">
        <title>Prediction of the coding sequences of unidentified human genes. IV. The coding sequences of 40 new genes (KIAA0121-KIAA0160) deduced by analysis of cDNA clones from human cell line KG-1.</title>
        <authorList>
            <person name="Nagase T."/>
            <person name="Seki N."/>
            <person name="Tanaka A."/>
            <person name="Ishikawa K."/>
            <person name="Nomura N."/>
        </authorList>
    </citation>
    <scope>NUCLEOTIDE SEQUENCE [LARGE SCALE MRNA]</scope>
    <scope>VARIANT ASN-349</scope>
    <source>
        <tissue>Bone marrow</tissue>
    </source>
</reference>
<reference key="3">
    <citation type="submission" date="2008-12" db="EMBL/GenBank/DDBJ databases">
        <authorList>
            <person name="Ohara O."/>
            <person name="Nagase T."/>
            <person name="Kikuno R."/>
            <person name="Nomura N."/>
        </authorList>
    </citation>
    <scope>SEQUENCE REVISION</scope>
</reference>
<reference key="4">
    <citation type="journal article" date="2004" name="Nat. Genet.">
        <title>Complete sequencing and characterization of 21,243 full-length human cDNAs.</title>
        <authorList>
            <person name="Ota T."/>
            <person name="Suzuki Y."/>
            <person name="Nishikawa T."/>
            <person name="Otsuki T."/>
            <person name="Sugiyama T."/>
            <person name="Irie R."/>
            <person name="Wakamatsu A."/>
            <person name="Hayashi K."/>
            <person name="Sato H."/>
            <person name="Nagai K."/>
            <person name="Kimura K."/>
            <person name="Makita H."/>
            <person name="Sekine M."/>
            <person name="Obayashi M."/>
            <person name="Nishi T."/>
            <person name="Shibahara T."/>
            <person name="Tanaka T."/>
            <person name="Ishii S."/>
            <person name="Yamamoto J."/>
            <person name="Saito K."/>
            <person name="Kawai Y."/>
            <person name="Isono Y."/>
            <person name="Nakamura Y."/>
            <person name="Nagahari K."/>
            <person name="Murakami K."/>
            <person name="Yasuda T."/>
            <person name="Iwayanagi T."/>
            <person name="Wagatsuma M."/>
            <person name="Shiratori A."/>
            <person name="Sudo H."/>
            <person name="Hosoiri T."/>
            <person name="Kaku Y."/>
            <person name="Kodaira H."/>
            <person name="Kondo H."/>
            <person name="Sugawara M."/>
            <person name="Takahashi M."/>
            <person name="Kanda K."/>
            <person name="Yokoi T."/>
            <person name="Furuya T."/>
            <person name="Kikkawa E."/>
            <person name="Omura Y."/>
            <person name="Abe K."/>
            <person name="Kamihara K."/>
            <person name="Katsuta N."/>
            <person name="Sato K."/>
            <person name="Tanikawa M."/>
            <person name="Yamazaki M."/>
            <person name="Ninomiya K."/>
            <person name="Ishibashi T."/>
            <person name="Yamashita H."/>
            <person name="Murakawa K."/>
            <person name="Fujimori K."/>
            <person name="Tanai H."/>
            <person name="Kimata M."/>
            <person name="Watanabe M."/>
            <person name="Hiraoka S."/>
            <person name="Chiba Y."/>
            <person name="Ishida S."/>
            <person name="Ono Y."/>
            <person name="Takiguchi S."/>
            <person name="Watanabe S."/>
            <person name="Yosida M."/>
            <person name="Hotuta T."/>
            <person name="Kusano J."/>
            <person name="Kanehori K."/>
            <person name="Takahashi-Fujii A."/>
            <person name="Hara H."/>
            <person name="Tanase T.-O."/>
            <person name="Nomura Y."/>
            <person name="Togiya S."/>
            <person name="Komai F."/>
            <person name="Hara R."/>
            <person name="Takeuchi K."/>
            <person name="Arita M."/>
            <person name="Imose N."/>
            <person name="Musashino K."/>
            <person name="Yuuki H."/>
            <person name="Oshima A."/>
            <person name="Sasaki N."/>
            <person name="Aotsuka S."/>
            <person name="Yoshikawa Y."/>
            <person name="Matsunawa H."/>
            <person name="Ichihara T."/>
            <person name="Shiohata N."/>
            <person name="Sano S."/>
            <person name="Moriya S."/>
            <person name="Momiyama H."/>
            <person name="Satoh N."/>
            <person name="Takami S."/>
            <person name="Terashima Y."/>
            <person name="Suzuki O."/>
            <person name="Nakagawa S."/>
            <person name="Senoh A."/>
            <person name="Mizoguchi H."/>
            <person name="Goto Y."/>
            <person name="Shimizu F."/>
            <person name="Wakebe H."/>
            <person name="Hishigaki H."/>
            <person name="Watanabe T."/>
            <person name="Sugiyama A."/>
            <person name="Takemoto M."/>
            <person name="Kawakami B."/>
            <person name="Yamazaki M."/>
            <person name="Watanabe K."/>
            <person name="Kumagai A."/>
            <person name="Itakura S."/>
            <person name="Fukuzumi Y."/>
            <person name="Fujimori Y."/>
            <person name="Komiyama M."/>
            <person name="Tashiro H."/>
            <person name="Tanigami A."/>
            <person name="Fujiwara T."/>
            <person name="Ono T."/>
            <person name="Yamada K."/>
            <person name="Fujii Y."/>
            <person name="Ozaki K."/>
            <person name="Hirao M."/>
            <person name="Ohmori Y."/>
            <person name="Kawabata A."/>
            <person name="Hikiji T."/>
            <person name="Kobatake N."/>
            <person name="Inagaki H."/>
            <person name="Ikema Y."/>
            <person name="Okamoto S."/>
            <person name="Okitani R."/>
            <person name="Kawakami T."/>
            <person name="Noguchi S."/>
            <person name="Itoh T."/>
            <person name="Shigeta K."/>
            <person name="Senba T."/>
            <person name="Matsumura K."/>
            <person name="Nakajima Y."/>
            <person name="Mizuno T."/>
            <person name="Morinaga M."/>
            <person name="Sasaki M."/>
            <person name="Togashi T."/>
            <person name="Oyama M."/>
            <person name="Hata H."/>
            <person name="Watanabe M."/>
            <person name="Komatsu T."/>
            <person name="Mizushima-Sugano J."/>
            <person name="Satoh T."/>
            <person name="Shirai Y."/>
            <person name="Takahashi Y."/>
            <person name="Nakagawa K."/>
            <person name="Okumura K."/>
            <person name="Nagase T."/>
            <person name="Nomura N."/>
            <person name="Kikuchi H."/>
            <person name="Masuho Y."/>
            <person name="Yamashita R."/>
            <person name="Nakai K."/>
            <person name="Yada T."/>
            <person name="Nakamura Y."/>
            <person name="Ohara O."/>
            <person name="Isogai T."/>
            <person name="Sugano S."/>
        </authorList>
    </citation>
    <scope>NUCLEOTIDE SEQUENCE [LARGE SCALE MRNA]</scope>
</reference>
<reference key="5">
    <citation type="journal article" date="2004" name="Nature">
        <title>The DNA sequence and biology of human chromosome 19.</title>
        <authorList>
            <person name="Grimwood J."/>
            <person name="Gordon L.A."/>
            <person name="Olsen A.S."/>
            <person name="Terry A."/>
            <person name="Schmutz J."/>
            <person name="Lamerdin J.E."/>
            <person name="Hellsten U."/>
            <person name="Goodstein D."/>
            <person name="Couronne O."/>
            <person name="Tran-Gyamfi M."/>
            <person name="Aerts A."/>
            <person name="Altherr M."/>
            <person name="Ashworth L."/>
            <person name="Bajorek E."/>
            <person name="Black S."/>
            <person name="Branscomb E."/>
            <person name="Caenepeel S."/>
            <person name="Carrano A.V."/>
            <person name="Caoile C."/>
            <person name="Chan Y.M."/>
            <person name="Christensen M."/>
            <person name="Cleland C.A."/>
            <person name="Copeland A."/>
            <person name="Dalin E."/>
            <person name="Dehal P."/>
            <person name="Denys M."/>
            <person name="Detter J.C."/>
            <person name="Escobar J."/>
            <person name="Flowers D."/>
            <person name="Fotopulos D."/>
            <person name="Garcia C."/>
            <person name="Georgescu A.M."/>
            <person name="Glavina T."/>
            <person name="Gomez M."/>
            <person name="Gonzales E."/>
            <person name="Groza M."/>
            <person name="Hammon N."/>
            <person name="Hawkins T."/>
            <person name="Haydu L."/>
            <person name="Ho I."/>
            <person name="Huang W."/>
            <person name="Israni S."/>
            <person name="Jett J."/>
            <person name="Kadner K."/>
            <person name="Kimball H."/>
            <person name="Kobayashi A."/>
            <person name="Larionov V."/>
            <person name="Leem S.-H."/>
            <person name="Lopez F."/>
            <person name="Lou Y."/>
            <person name="Lowry S."/>
            <person name="Malfatti S."/>
            <person name="Martinez D."/>
            <person name="McCready P.M."/>
            <person name="Medina C."/>
            <person name="Morgan J."/>
            <person name="Nelson K."/>
            <person name="Nolan M."/>
            <person name="Ovcharenko I."/>
            <person name="Pitluck S."/>
            <person name="Pollard M."/>
            <person name="Popkie A.P."/>
            <person name="Predki P."/>
            <person name="Quan G."/>
            <person name="Ramirez L."/>
            <person name="Rash S."/>
            <person name="Retterer J."/>
            <person name="Rodriguez A."/>
            <person name="Rogers S."/>
            <person name="Salamov A."/>
            <person name="Salazar A."/>
            <person name="She X."/>
            <person name="Smith D."/>
            <person name="Slezak T."/>
            <person name="Solovyev V."/>
            <person name="Thayer N."/>
            <person name="Tice H."/>
            <person name="Tsai M."/>
            <person name="Ustaszewska A."/>
            <person name="Vo N."/>
            <person name="Wagner M."/>
            <person name="Wheeler J."/>
            <person name="Wu K."/>
            <person name="Xie G."/>
            <person name="Yang J."/>
            <person name="Dubchak I."/>
            <person name="Furey T.S."/>
            <person name="DeJong P."/>
            <person name="Dickson M."/>
            <person name="Gordon D."/>
            <person name="Eichler E.E."/>
            <person name="Pennacchio L.A."/>
            <person name="Richardson P."/>
            <person name="Stubbs L."/>
            <person name="Rokhsar D.S."/>
            <person name="Myers R.M."/>
            <person name="Rubin E.M."/>
            <person name="Lucas S.M."/>
        </authorList>
    </citation>
    <scope>NUCLEOTIDE SEQUENCE [LARGE SCALE GENOMIC DNA]</scope>
</reference>
<reference key="6">
    <citation type="journal article" date="2004" name="Genome Res.">
        <title>The status, quality, and expansion of the NIH full-length cDNA project: the Mammalian Gene Collection (MGC).</title>
        <authorList>
            <consortium name="The MGC Project Team"/>
        </authorList>
    </citation>
    <scope>NUCLEOTIDE SEQUENCE [LARGE SCALE MRNA]</scope>
    <source>
        <tissue>Brain</tissue>
        <tissue>Skin</tissue>
        <tissue>Uterus</tissue>
    </source>
</reference>
<reference key="7">
    <citation type="journal article" date="2003" name="Mol. Cell. Biol.">
        <title>Distinct cysteine residues in Keap1 are required for Keap1-dependent ubiquitination of Nrf2 and for stabilization of Nrf2 by chemopreventive agents and oxidative stress.</title>
        <authorList>
            <person name="Zhang D.D."/>
            <person name="Hannink M."/>
        </authorList>
    </citation>
    <scope>FUNCTION</scope>
    <scope>MUTAGENESIS OF CYS-151; CYS-273 AND CYS-288</scope>
    <scope>SUBCELLULAR LOCATION</scope>
</reference>
<reference key="8">
    <citation type="journal article" date="2004" name="Biochemistry">
        <title>Fetal Alz-50 clone 1 interacts with the human orthologue of the Kelch-like Ech-associated protein.</title>
        <authorList>
            <person name="Strachan G.D."/>
            <person name="Morgan K.L."/>
            <person name="Otis L.L."/>
            <person name="Caltagarone J."/>
            <person name="Gittis A."/>
            <person name="Bowser R."/>
            <person name="Jordan-Sciutto K.L."/>
        </authorList>
    </citation>
    <scope>INTERACTION WITH NFE2L2 AND BPTF</scope>
    <scope>FUNCTION</scope>
    <scope>TISSUE SPECIFICITY</scope>
    <scope>SUBCELLULAR LOCATION</scope>
</reference>
<reference key="9">
    <citation type="journal article" date="2004" name="Mol. Cell. Biol.">
        <title>Keap1 is a redox-regulated substrate adaptor protein for a Cul3-dependent ubiquitin ligase complex.</title>
        <authorList>
            <person name="Zhang D.D."/>
            <person name="Lo S.-C."/>
            <person name="Cross J.V."/>
            <person name="Templeton D.J."/>
            <person name="Hannink M."/>
        </authorList>
    </citation>
    <scope>FUNCTION</scope>
    <scope>INTERACTION WITH CUL3 AND RBX1</scope>
    <scope>MUTAGENESIS OF 125-ILE--GLY-127 AND 162-TYR--ILE-164</scope>
    <scope>UBIQUITINATION</scope>
</reference>
<reference key="10">
    <citation type="journal article" date="2005" name="J. Biol. Chem.">
        <title>Ubiquitination of Keap1, a BTB-Kelch substrate adaptor protein for Cul3, targets Keap1 for degradation by a proteasome-independent pathway.</title>
        <authorList>
            <person name="Zhang D.D."/>
            <person name="Lo S.C."/>
            <person name="Sun Z."/>
            <person name="Habib G.M."/>
            <person name="Lieberman M.W."/>
            <person name="Hannink M."/>
        </authorList>
    </citation>
    <scope>FUNCTION</scope>
    <scope>IDENTIFICATION IN A COMPLEX WITH CUL3 AND RBX1</scope>
    <scope>UBIQUITINATION</scope>
    <scope>ACTIVITY REGULATION</scope>
    <scope>MUTAGENESIS OF CYS-151</scope>
</reference>
<reference key="11">
    <citation type="journal article" date="2005" name="Mol. Cell. Biol.">
        <title>BTB protein Keap1 targets antioxidant transcription factor Nrf2 for ubiquitination by the Cullin 3-Roc1 ligase.</title>
        <authorList>
            <person name="Furukawa M."/>
            <person name="Xiong Y."/>
        </authorList>
    </citation>
    <scope>FUNCTION</scope>
    <scope>SUBCELLULAR LOCATION</scope>
    <scope>IDENTIFICATION IN THE BCR(KEAP1) COMPLEX</scope>
    <scope>INTERACTION WITH NFE2L2</scope>
    <scope>MUTAGENESIS OF 123-VAL--GLY-127 AND 161-MET-TYR-162</scope>
</reference>
<reference key="12">
    <citation type="journal article" date="2005" name="Mol. Cell. Biol.">
        <title>Nuclear oncoprotein prothymosin alpha is a partner of Keap1: implications for expression of oxidative stress-protecting genes.</title>
        <authorList>
            <person name="Karapetian R.N."/>
            <person name="Evstafieva A.G."/>
            <person name="Abaeva I.S."/>
            <person name="Chichkova N.V."/>
            <person name="Filonov G.S."/>
            <person name="Rubtsov Y.P."/>
            <person name="Sukhacheva E.A."/>
            <person name="Melnikov S.V."/>
            <person name="Schneider U."/>
            <person name="Wanker E.E."/>
            <person name="Vartapetian A.B."/>
        </authorList>
    </citation>
    <scope>INTERACTION WITH PTMA</scope>
    <scope>SUBCELLULAR LOCATION</scope>
    <scope>MUTAGENESIS OF LEU-308 AND LEU-310</scope>
</reference>
<reference key="13">
    <citation type="journal article" date="2009" name="Biochem. J.">
        <title>Cul3-mediated Nrf2 ubiquitination and antioxidant response element (ARE) activation are dependent on the partial molar volume at position 151 of Keap1.</title>
        <authorList>
            <person name="Eggler A.L."/>
            <person name="Small E."/>
            <person name="Hannink M."/>
            <person name="Mesecar A.D."/>
        </authorList>
    </citation>
    <scope>FUNCTION</scope>
    <scope>ACTIVITY REGULATION</scope>
    <scope>DOMAIN</scope>
    <scope>MUTAGENESIS OF CYS-151</scope>
</reference>
<reference key="14">
    <citation type="journal article" date="2005" name="Proc. Natl. Acad. Sci. U.S.A.">
        <title>Modifying specific cysteines of the electrophile-sensing human Keap1 protein is insufficient to disrupt binding to the Nrf2 domain Neh2.</title>
        <authorList>
            <person name="Eggler A.L."/>
            <person name="Liu G."/>
            <person name="Pezzuto J.M."/>
            <person name="van Breemen R.B."/>
            <person name="Mesecar A.D."/>
        </authorList>
    </citation>
    <scope>FUNCTION</scope>
    <scope>INTERACTION WITH NFE2L2</scope>
</reference>
<reference key="15">
    <citation type="journal article" date="2006" name="J. Biol. Chem.">
        <title>Nrf1 is targeted to the endoplasmic reticulum membrane by an N-terminal transmembrane domain. Inhibition of nuclear translocation and transacting function.</title>
        <authorList>
            <person name="Wang W."/>
            <person name="Chan J.Y."/>
        </authorList>
    </citation>
    <scope>INTERACTION WITH NFE2L1</scope>
</reference>
<reference key="16">
    <citation type="journal article" date="2006" name="J. Biol. Chem.">
        <title>PGAM5, a Bcl-XL-interacting protein, is a novel substrate for the redox-regulated Keap1-dependent ubiquitin ligase complex.</title>
        <authorList>
            <person name="Lo S.-C."/>
            <person name="Hannink M."/>
        </authorList>
    </citation>
    <scope>INTERACTION WITH PGAM5</scope>
    <scope>FUNCTION</scope>
    <scope>ACTIVITY REGULATION</scope>
    <scope>DOMAIN</scope>
    <scope>MUTAGENESIS OF CYS-151; TYR-334; ARG-415; ARG-483 AND TYR-572</scope>
</reference>
<reference key="17">
    <citation type="journal article" date="2007" name="J. Biol. Chem.">
        <title>Novel n-3 fatty acid oxidation products activate Nrf2 by destabilizing the association between Keap1 and Cullin3.</title>
        <authorList>
            <person name="Gao L."/>
            <person name="Wang J."/>
            <person name="Sekhar K.R."/>
            <person name="Yin H."/>
            <person name="Yared N.F."/>
            <person name="Schneider S.N."/>
            <person name="Sasi S."/>
            <person name="Dalton T.P."/>
            <person name="Anderson M.E."/>
            <person name="Chan J.Y."/>
            <person name="Morrow J.D."/>
            <person name="Freeman M.L."/>
        </authorList>
    </citation>
    <scope>FUNCTION</scope>
    <scope>ACTIVITY REGULATION</scope>
    <scope>INTERACTION WITH CUL3</scope>
</reference>
<reference key="18">
    <citation type="journal article" date="2008" name="Chem. Res. Toxicol.">
        <title>Covalent modification at Cys151 dissociates the electrophile sensor Keap1 from the ubiquitin ligase CUL3.</title>
        <authorList>
            <person name="Rachakonda G."/>
            <person name="Xiong Y."/>
            <person name="Sekhar K.R."/>
            <person name="Stamer S.L."/>
            <person name="Liebler D.C."/>
            <person name="Freeman M.L."/>
        </authorList>
    </citation>
    <scope>FUNCTION</scope>
    <scope>ACTIVITY REGULATION</scope>
    <scope>DOMAIN</scope>
    <scope>MUTAGENESIS OF CYS-151</scope>
</reference>
<reference key="19">
    <citation type="journal article" date="2008" name="Exp. Cell Res.">
        <title>PGAM5 tethers a ternary complex containing Keap1 and Nrf2 to mitochondria.</title>
        <authorList>
            <person name="Lo S.-C."/>
            <person name="Hannink M."/>
        </authorList>
    </citation>
    <scope>INTERACTION WITH NFE2L2 AND PGAM5</scope>
</reference>
<reference key="20">
    <citation type="journal article" date="2009" name="PLoS ONE">
        <title>Ectodermal-neural cortex 1 down-regulates Nrf2 at the translational level.</title>
        <authorList>
            <person name="Wang X.J."/>
            <person name="Zhang D.D."/>
        </authorList>
    </citation>
    <scope>INTERACTION WITH ENC1</scope>
    <scope>SUBCELLULAR LOCATION</scope>
</reference>
<reference key="21">
    <citation type="journal article" date="2010" name="Autophagy">
        <title>Keap1 facilitates p62-mediated ubiquitin aggregate clearance via autophagy.</title>
        <authorList>
            <person name="Fan W."/>
            <person name="Tang Z."/>
            <person name="Chen D."/>
            <person name="Moughon D."/>
            <person name="Ding X."/>
            <person name="Chen S."/>
            <person name="Zhu M."/>
            <person name="Zhong Q."/>
        </authorList>
    </citation>
    <scope>INTERACTION WITH SQSTM1</scope>
    <scope>ACTIVITY REGULATION</scope>
</reference>
<reference key="22">
    <citation type="journal article" date="2010" name="J. Biol. Chem.">
        <title>p62/SQSTM1 is a target gene for transcription factor NRF2 and creates a positive feedback loop by inducing antioxidant response element-driven gene transcription.</title>
        <authorList>
            <person name="Jain A."/>
            <person name="Lamark T."/>
            <person name="Sjoettem E."/>
            <person name="Larsen K.B."/>
            <person name="Awuh J.A."/>
            <person name="Oevervatn A."/>
            <person name="McMahon M."/>
            <person name="Hayes J.D."/>
            <person name="Johansen T."/>
        </authorList>
    </citation>
    <scope>FUNCTION</scope>
    <scope>INTERACTION WITH SQSTM1</scope>
    <scope>ACTIVITY REGULATION</scope>
    <scope>SUBCELLULAR LOCATION</scope>
    <scope>MUTAGENESIS OF ARG-380; ASN-382; ARG-415; HIS-436; ARG-483; TYR-525 AND TYR-572</scope>
</reference>
<reference key="23">
    <citation type="journal article" date="2011" name="BMC Syst. Biol.">
        <title>Initial characterization of the human central proteome.</title>
        <authorList>
            <person name="Burkard T.R."/>
            <person name="Planyavsky M."/>
            <person name="Kaupe I."/>
            <person name="Breitwieser F.P."/>
            <person name="Buerckstuemmer T."/>
            <person name="Bennett K.L."/>
            <person name="Superti-Furga G."/>
            <person name="Colinge J."/>
        </authorList>
    </citation>
    <scope>IDENTIFICATION BY MASS SPECTROMETRY [LARGE SCALE ANALYSIS]</scope>
</reference>
<reference key="24">
    <citation type="journal article" date="2013" name="Cell Metab.">
        <title>Sestrins activate Nrf2 by promoting p62-dependent autophagic degradation of Keap1 and prevent oxidative liver damage.</title>
        <authorList>
            <person name="Bae S.H."/>
            <person name="Sung S.H."/>
            <person name="Oh S.Y."/>
            <person name="Lim J.M."/>
            <person name="Lee S.K."/>
            <person name="Park Y.N."/>
            <person name="Lee H.E."/>
            <person name="Kang D."/>
            <person name="Rhee S.G."/>
        </authorList>
    </citation>
    <scope>INTERACTION WITH SESN1 AND SESN2</scope>
</reference>
<reference key="25">
    <citation type="journal article" date="2013" name="Nature">
        <title>Autophagy promotes primary ciliogenesis by removing OFD1 from centriolar satellites.</title>
        <authorList>
            <person name="Tang Z."/>
            <person name="Lin M.G."/>
            <person name="Stowe T.R."/>
            <person name="Chen S."/>
            <person name="Zhu M."/>
            <person name="Stearns T."/>
            <person name="Franco B."/>
            <person name="Zhong Q."/>
        </authorList>
    </citation>
    <scope>INTERACTION WITH MAP1LC3B</scope>
</reference>
<reference key="26">
    <citation type="journal article" date="2015" name="PLoS ONE">
        <title>Client proteins and small molecule inhibitors display distinct binding preferences for constitutive and stress-induced HSP90 isoforms and their conformationally restricted mutants.</title>
        <authorList>
            <person name="Prince T.L."/>
            <person name="Kijima T."/>
            <person name="Tatokoro M."/>
            <person name="Lee S."/>
            <person name="Tsutsumi S."/>
            <person name="Yim K."/>
            <person name="Rivas C."/>
            <person name="Alarcon S."/>
            <person name="Schwartz H."/>
            <person name="Khamit-Kush K."/>
            <person name="Scroggins B.T."/>
            <person name="Beebe K."/>
            <person name="Trepel J.B."/>
            <person name="Neckers L."/>
        </authorList>
    </citation>
    <scope>INTERACTION WITH HSP90AA1 AND HSP90AB1</scope>
</reference>
<reference key="27">
    <citation type="journal article" date="2014" name="Cell Rep.">
        <title>The Marburg virus VP24 protein interacts with Keap1 to activate the cytoprotective antioxidant response pathway.</title>
        <authorList>
            <person name="Edwards M.R."/>
            <person name="Johnson B."/>
            <person name="Mire C.E."/>
            <person name="Xu W."/>
            <person name="Shabman R.S."/>
            <person name="Speller L.N."/>
            <person name="Leung D.W."/>
            <person name="Geisbert T.W."/>
            <person name="Amarasinghe G.K."/>
            <person name="Basler C.F."/>
        </authorList>
    </citation>
    <scope>INTERACTION WITH EBOLAVIRUS PROTEIN VP24 (MICROBIAL INFECTION)</scope>
</reference>
<reference key="28">
    <citation type="journal article" date="2017" name="Cell Rep.">
        <title>Keap1/cullin3 modulates p62/SQSTM1 activity via UBA domain ubiquitination.</title>
        <authorList>
            <person name="Lee Y."/>
            <person name="Chou T.F."/>
            <person name="Pittman S.K."/>
            <person name="Keith A.L."/>
            <person name="Razani B."/>
            <person name="Weihl C.C."/>
        </authorList>
    </citation>
    <scope>FUNCTION</scope>
</reference>
<reference key="29">
    <citation type="journal article" date="2018" name="Nature">
        <title>Itaconate is an anti-inflammatory metabolite that activates Nrf2 via alkylation of KEAP1.</title>
        <authorList>
            <person name="Mills E.L."/>
            <person name="Ryan D.G."/>
            <person name="Prag H.A."/>
            <person name="Dikovskaya D."/>
            <person name="Menon D."/>
            <person name="Zaslona Z."/>
            <person name="Jedrychowski M.P."/>
            <person name="Costa A.S.H."/>
            <person name="Higgins M."/>
            <person name="Hams E."/>
            <person name="Szpyt J."/>
            <person name="Runtsch M.C."/>
            <person name="King M.S."/>
            <person name="McGouran J.F."/>
            <person name="Fischer R."/>
            <person name="Kessler B.M."/>
            <person name="McGettrick A.F."/>
            <person name="Hughes M.M."/>
            <person name="Carroll R.G."/>
            <person name="Booty L.M."/>
            <person name="Knatko E.V."/>
            <person name="Meakin P.J."/>
            <person name="Ashford M.L.J."/>
            <person name="Modis L.K."/>
            <person name="Brunori G."/>
            <person name="Sevin D.C."/>
            <person name="Fallon P.G."/>
            <person name="Caldwell S.T."/>
            <person name="Kunji E.R.S."/>
            <person name="Chouchani E.T."/>
            <person name="Frezza C."/>
            <person name="Dinkova-Kostova A.T."/>
            <person name="Hartley R.C."/>
            <person name="Murphy M.P."/>
            <person name="O'Neill L.A."/>
        </authorList>
    </citation>
    <scope>FUNCTION</scope>
    <scope>ALKYLATION AT CYS-151; CYS-257; CYS-273 AND CYS-288</scope>
    <scope>ACTIVITY REGULATION</scope>
    <scope>DOMAIN</scope>
    <scope>MUTAGENESIS OF CYS-151</scope>
</reference>
<reference key="30">
    <citation type="journal article" date="2018" name="Nature">
        <title>A metabolite-derived protein modification integrates glycolysis with KEAP1-NRF2 signalling.</title>
        <authorList>
            <person name="Bollong M.J."/>
            <person name="Lee G."/>
            <person name="Coukos J.S."/>
            <person name="Yun H."/>
            <person name="Zambaldo C."/>
            <person name="Chang J.W."/>
            <person name="Chin E.N."/>
            <person name="Ahmad I."/>
            <person name="Chatterjee A.K."/>
            <person name="Lairson L.L."/>
            <person name="Schultz P.G."/>
            <person name="Moellering R.E."/>
        </authorList>
    </citation>
    <scope>CROSS-LINK AT ARG-135 AND CYS-151</scope>
    <scope>ACTIVITY REGULATION</scope>
    <scope>DOMAIN</scope>
    <scope>MUTAGENESIS OF ARG-15; ARG-135 AND CYS-151</scope>
</reference>
<reference key="31">
    <citation type="journal article" date="2017" name="J. Biol. Chem.">
        <title>Stress-sensing mechanisms and the physiological roles of the Keap1-Nrf2 system during cellular stress.</title>
        <authorList>
            <person name="Suzuki T."/>
            <person name="Yamamoto M."/>
        </authorList>
    </citation>
    <scope>REVIEW</scope>
</reference>
<reference key="32">
    <citation type="journal article" date="2020" name="Nat. Commun.">
        <title>TRIM25 promotes the cell survival and growth of hepatocellular carcinoma through targeting Keap1-Nrf2 pathway.</title>
        <authorList>
            <person name="Liu Y."/>
            <person name="Tao S."/>
            <person name="Liao L."/>
            <person name="Li Y."/>
            <person name="Li H."/>
            <person name="Li Z."/>
            <person name="Lin L."/>
            <person name="Wan X."/>
            <person name="Yang X."/>
            <person name="Chen L."/>
        </authorList>
    </citation>
    <scope>UBIQUITINATION</scope>
</reference>
<reference key="33">
    <citation type="journal article" date="2023" name="Nat. Commun.">
        <title>USP25 regulates KEAP1-NRF2 anti-oxidation axis and its inactivation protects acetaminophen-induced liver injury in male mice.</title>
        <authorList>
            <person name="Cai C."/>
            <person name="Ma H."/>
            <person name="Peng J."/>
            <person name="Shen X."/>
            <person name="Zhen X."/>
            <person name="Yu C."/>
            <person name="Zhang P."/>
            <person name="Ji F."/>
            <person name="Wang J."/>
        </authorList>
    </citation>
    <scope>FUNCTION</scope>
    <scope>DEUBIQUITINATION BY USP25</scope>
</reference>
<reference key="34">
    <citation type="journal article" date="2023" name="Oncogene">
        <title>C4orf19 inhibits colorectal cancer cell proliferation by competitively binding to Keap1 with TRIM25 via the USP17/Elk-1/CDK6 axis.</title>
        <authorList>
            <person name="Huang S."/>
            <person name="Li J."/>
            <person name="Wu S."/>
            <person name="Zheng Z."/>
            <person name="Wang C."/>
            <person name="Li H."/>
            <person name="Zhao L."/>
            <person name="Zhang X."/>
            <person name="Huang H."/>
            <person name="Huang C."/>
            <person name="Xie Q."/>
        </authorList>
    </citation>
    <scope>INTERACTION WITH PGCKA1</scope>
    <scope>MUTAGENESIS OF LYS-615</scope>
</reference>
<reference key="35">
    <citation type="journal article" date="2004" name="Acta Crystallogr. D">
        <title>Crystallization and initial crystallographic analysis of the Kelch domain from human Keap1.</title>
        <authorList>
            <person name="Li X."/>
            <person name="Zhang D."/>
            <person name="Hannink M."/>
            <person name="Beamer L.J."/>
        </authorList>
    </citation>
    <scope>X-RAY CRYSTALLOGRAPHY (1.85 ANGSTROMS) OF 321-609</scope>
</reference>
<reference key="36">
    <citation type="journal article" date="2005" name="Acta Crystallogr. D">
        <title>Conserved solvent and side-chain interactions in the 1.35 Angstrom structure of the Kelch domain of Keap1.</title>
        <authorList>
            <person name="Beamer L.J."/>
            <person name="Li X."/>
            <person name="Bottoms C.A."/>
            <person name="Hannink M."/>
        </authorList>
    </citation>
    <scope>X-RAY CRYSTALLOGRAPHY (1.35 ANGSTROMS) OF 321-609</scope>
</reference>
<reference key="37">
    <citation type="journal article" date="2006" name="EMBO J.">
        <title>Structure of the Keap1:Nrf2 interface provides mechanistic insight into Nrf2 signaling.</title>
        <authorList>
            <person name="Lo S.-C."/>
            <person name="Li X."/>
            <person name="Henzl M.T."/>
            <person name="Beamer L.J."/>
            <person name="Hannink M."/>
        </authorList>
    </citation>
    <scope>X-RAY CRYSTALLOGRAPHY (1.5 ANGSTROMS) OF 321-609 IN COMPLEX WITH NFE2L2</scope>
    <scope>SUBUNIT</scope>
    <scope>MUTAGENESIS OF TYR-334; ARG-380; ASN-382; ARG-415; HIS-436; PHE-478; ARG-483; TYR-525 AND TYR-572</scope>
</reference>
<reference evidence="40 41 42" key="38">
    <citation type="journal article" date="2014" name="PLoS ONE">
        <title>Structure of the BTB domain of Keap1 and its interaction with the triterpenoid antagonist CDDO.</title>
        <authorList>
            <person name="Cleasby A."/>
            <person name="Yon J."/>
            <person name="Day P.J."/>
            <person name="Richardson C."/>
            <person name="Tickle I.J."/>
            <person name="Williams P.A."/>
            <person name="Callahan J.F."/>
            <person name="Carr R."/>
            <person name="Concha N."/>
            <person name="Kerns J.K."/>
            <person name="Qi H."/>
            <person name="Sweitzer T."/>
            <person name="Ward P."/>
            <person name="Davies T.G."/>
        </authorList>
    </citation>
    <scope>X-RAY CRYSTALLOGRAPHY (2.35 ANGSTROMS) OF 48-180</scope>
    <scope>INTERACTION WITH CUL3</scope>
    <scope>MUTAGENESIS OF CYS-151</scope>
</reference>
<reference key="39">
    <citation type="journal article" date="2006" name="Mol. Cell">
        <title>Structural basis for defects of Keap1 activity provoked by its point mutations in lung cancer.</title>
        <authorList>
            <person name="Padmanabhan B."/>
            <person name="Tong K.I."/>
            <person name="Ohta T."/>
            <person name="Nakamura Y."/>
            <person name="Scharlock M."/>
            <person name="Ohtsuji M."/>
            <person name="Kang M."/>
            <person name="Kobayashi A."/>
            <person name="Yokoyama S."/>
            <person name="Yamamoto M."/>
        </authorList>
    </citation>
    <scope>VARIANTS CYS-364 AND CYS-430</scope>
    <scope>CHARACTERIZATION OF VARIANTS CYS-364 AND CYS-430</scope>
</reference>
<reference key="40">
    <citation type="journal article" date="2006" name="PLoS Med.">
        <title>Dysfunctional KEAP1-NRF2 interaction in non-small-cell lung cancer.</title>
        <authorList>
            <person name="Singh A."/>
            <person name="Misra V."/>
            <person name="Thimmulappa R.K."/>
            <person name="Lee H."/>
            <person name="Ames S."/>
            <person name="Hoque M.O."/>
            <person name="Herman J.G."/>
            <person name="Baylin S.B."/>
            <person name="Sidransky D."/>
            <person name="Gabrielson E."/>
            <person name="Brock M.V."/>
            <person name="Biswal S."/>
        </authorList>
    </citation>
    <scope>VARIANTS PHE-167; HIS-236; LEU-284; CYS-333 AND SER-350</scope>
    <scope>CHARACTERIZATION OF VARIANTS HIS-236 AND CYS-333</scope>
</reference>
<reference key="41">
    <citation type="journal article" date="2006" name="Science">
        <title>The consensus coding sequences of human breast and colorectal cancers.</title>
        <authorList>
            <person name="Sjoeblom T."/>
            <person name="Jones S."/>
            <person name="Wood L.D."/>
            <person name="Parsons D.W."/>
            <person name="Lin J."/>
            <person name="Barber T.D."/>
            <person name="Mandelker D."/>
            <person name="Leary R.J."/>
            <person name="Ptak J."/>
            <person name="Silliman N."/>
            <person name="Szabo S."/>
            <person name="Buckhaults P."/>
            <person name="Farrell C."/>
            <person name="Meeh P."/>
            <person name="Markowitz S.D."/>
            <person name="Willis J."/>
            <person name="Dawson D."/>
            <person name="Willson J.K.V."/>
            <person name="Gazdar A.F."/>
            <person name="Hartigan J."/>
            <person name="Wu L."/>
            <person name="Liu C."/>
            <person name="Parmigiani G."/>
            <person name="Park B.H."/>
            <person name="Bachman K.E."/>
            <person name="Papadopoulos N."/>
            <person name="Vogelstein B."/>
            <person name="Kinzler K.W."/>
            <person name="Velculescu V.E."/>
        </authorList>
    </citation>
    <scope>VARIANTS [LARGE SCALE ANALYSIS] TYR-23 AND VAL-522</scope>
</reference>
<comment type="function">
    <text evidence="3 4 5 6 8 9 15 16 17 20 21 28 29 33">Substrate-specific adapter of a BCR (BTB-CUL3-RBX1) E3 ubiquitin ligase complex that regulates the response to oxidative stress by targeting NFE2L2/NRF2 for ubiquitination (PubMed:14585973, PubMed:15379550, PubMed:15572695, PubMed:15601839, PubMed:15983046, PubMed:37339955). KEAP1 acts as a key sensor of oxidative and electrophilic stress: in normal conditions, the BCR(KEAP1) complex mediates ubiquitination and degradation of NFE2L2/NRF2, a transcription factor regulating expression of many cytoprotective genes (PubMed:15601839, PubMed:16006525). In response to oxidative stress, different electrophile metabolites trigger non-enzymatic covalent modifications of highly reactive cysteine residues in KEAP1, leading to inactivate the ubiquitin ligase activity of the BCR(KEAP1) complex, promoting NFE2L2/NRF2 nuclear accumulation and expression of phase II detoxifying enzymes (PubMed:16006525, PubMed:17127771, PubMed:18251510, PubMed:19489739, PubMed:29590092). In response to selective autophagy, KEAP1 is sequestered in inclusion bodies following its interaction with SQSTM1/p62, leading to inactivation of the BCR(KEAP1) complex and activation of NFE2L2/NRF2 (PubMed:20452972). The BCR(KEAP1) complex also mediates ubiquitination of SQSTM1/p62, increasing SQSTM1/p62 sequestering activity and degradation (PubMed:28380357). The BCR(KEAP1) complex also targets BPTF and PGAM5 for ubiquitination and degradation by the proteasome (PubMed:15379550, PubMed:17046835).</text>
</comment>
<comment type="activity regulation">
    <text evidence="8 15 16 17 20 21 22 29 30">Ubiquitin ligase activity of the BCR(KEAP1) complex is inhibited by oxidative stress and electrophile metabolites such as sulforaphane (PubMed:15983046, PubMed:17046835, PubMed:29590092, PubMed:30323285). Electrophile metabolites react with reactive cysteine residues in KEAP1 and trigger non-enzymatic covalent modifications of these cysteine residues, leading to inactivate the ubiquitin ligase activity of the BCR(KEAP1) complex (PubMed:17127771, PubMed:18251510, PubMed:19489739, PubMed:29590092, PubMed:30323285). Selective autophagy also inactivates the BCR(KEAP1) complex via interaction between KEAP1 and SQSTM1/p62, which sequesters the complex in inclusion bodies and promotes its degradation (PubMed:20452972, PubMed:20495340).</text>
</comment>
<comment type="pathway">
    <text evidence="3 4 5 6 8">Protein modification; protein ubiquitination.</text>
</comment>
<comment type="subunit">
    <text evidence="4 5 6 7 8 9 11 12 15 16 17 18 19 21 22 23 24 26 27 32">Component of the BCR(KEAP1) E3 ubiquitin ligase complex, at least composed of 2 molecules of CUL3, 2 molecules of KEAP1, and RBX1 (PubMed:15572695, PubMed:15601839, PubMed:15983046, PubMed:17127771, PubMed:18251510, PubMed:24896564). Interacts with NFE2L2/NRF2; the interaction is direct (PubMed:15379550, PubMed:15601839, PubMed:16006525, PubMed:16888629, PubMed:18387606). Forms a ternary complex with NFE2L2/NRF2 and PGAM5 (PubMed:17046835). Interacts with (phosphorylated) SQSTM1/p62; the interaction is direct and inactivates the BCR(KEAP1) complex by sequestering it in inclusion bodies, promoting its degradation (PubMed:20452972, PubMed:20495340). Interacts with NFE2L1 (PubMed:16687406). Interacts with BPTF and PTMA (PubMed:15657435). Interacts with MAP1LC3B (PubMed:24089205). Interacts indirectly with ENC1 (PubMed:19424503). Interacts with SESN1 and SESN2 (PubMed:23274085). Interacts with HSP90AA1 and HSP90AB1 (PubMed:26517842). Interacts with PGCKA1; this interaction prevents the ubiquitination of KEAP1 by TRIM25, thus protecting KEAP1 from degradation (PubMed:36882524).</text>
</comment>
<comment type="subunit">
    <text evidence="25">(Microbial infection) Interacts with ebolavirus protein VP24; this interaction activates transcription factor NFE2L2/NRF2 by blocking its interaction with KEAP1.</text>
</comment>
<comment type="interaction">
    <interactant intactId="EBI-751001">
        <id>Q14145</id>
    </interactant>
    <interactant intactId="EBI-6169747">
        <id>Q5JTC6</id>
        <label>AMER1</label>
    </interactant>
    <organismsDiffer>false</organismsDiffer>
    <experiments>2</experiments>
</comment>
<comment type="interaction">
    <interactant intactId="EBI-751001">
        <id>Q14145</id>
    </interactant>
    <interactant intactId="EBI-11954519">
        <id>Q49AR9</id>
        <label>ANKS1A</label>
    </interactant>
    <organismsDiffer>false</organismsDiffer>
    <experiments>3</experiments>
</comment>
<comment type="interaction">
    <interactant intactId="EBI-751001">
        <id>Q14145</id>
    </interactant>
    <interactant intactId="EBI-750475">
        <id>P45381</id>
        <label>ASPA</label>
    </interactant>
    <organismsDiffer>false</organismsDiffer>
    <experiments>4</experiments>
</comment>
<comment type="interaction">
    <interactant intactId="EBI-751001">
        <id>Q14145</id>
    </interactant>
    <interactant intactId="EBI-21977454">
        <id>O14525-2</id>
        <label>ASTN1</label>
    </interactant>
    <organismsDiffer>false</organismsDiffer>
    <experiments>4</experiments>
</comment>
<comment type="interaction">
    <interactant intactId="EBI-751001">
        <id>Q14145</id>
    </interactant>
    <interactant intactId="EBI-10175276">
        <id>A9UGY9</id>
        <label>ATG5</label>
    </interactant>
    <organismsDiffer>false</organismsDiffer>
    <experiments>3</experiments>
</comment>
<comment type="interaction">
    <interactant intactId="EBI-751001">
        <id>Q14145</id>
    </interactant>
    <interactant intactId="EBI-1047414">
        <id>Q9H1Y0</id>
        <label>ATG5</label>
    </interactant>
    <organismsDiffer>false</organismsDiffer>
    <experiments>3</experiments>
</comment>
<comment type="interaction">
    <interactant intactId="EBI-751001">
        <id>Q14145</id>
    </interactant>
    <interactant intactId="EBI-11603468">
        <id>Q2NKX9</id>
        <label>C2orf68</label>
    </interactant>
    <organismsDiffer>false</organismsDiffer>
    <experiments>3</experiments>
</comment>
<comment type="interaction">
    <interactant intactId="EBI-751001">
        <id>Q14145</id>
    </interactant>
    <interactant intactId="EBI-3866279">
        <id>Q9BWT7</id>
        <label>CARD10</label>
    </interactant>
    <organismsDiffer>false</organismsDiffer>
    <experiments>3</experiments>
</comment>
<comment type="interaction">
    <interactant intactId="EBI-751001">
        <id>Q14145</id>
    </interactant>
    <interactant intactId="EBI-745269">
        <id>Q9NPC3</id>
        <label>CCNB1IP1</label>
    </interactant>
    <organismsDiffer>false</organismsDiffer>
    <experiments>4</experiments>
</comment>
<comment type="interaction">
    <interactant intactId="EBI-751001">
        <id>Q14145</id>
    </interactant>
    <interactant intactId="EBI-982999">
        <id>P02452</id>
        <label>COL1A1</label>
    </interactant>
    <organismsDiffer>false</organismsDiffer>
    <experiments>3</experiments>
</comment>
<comment type="interaction">
    <interactant intactId="EBI-751001">
        <id>Q14145</id>
    </interactant>
    <interactant intactId="EBI-12375799">
        <id>P02458-1</id>
        <label>COL2A1</label>
    </interactant>
    <organismsDiffer>false</organismsDiffer>
    <experiments>3</experiments>
</comment>
<comment type="interaction">
    <interactant intactId="EBI-751001">
        <id>Q14145</id>
    </interactant>
    <interactant intactId="EBI-347804">
        <id>P68400</id>
        <label>CSNK2A1</label>
    </interactant>
    <organismsDiffer>false</organismsDiffer>
    <experiments>3</experiments>
</comment>
<comment type="interaction">
    <interactant intactId="EBI-751001">
        <id>Q14145</id>
    </interactant>
    <interactant intactId="EBI-456129">
        <id>Q13618</id>
        <label>CUL3</label>
    </interactant>
    <organismsDiffer>false</organismsDiffer>
    <experiments>5</experiments>
</comment>
<comment type="interaction">
    <interactant intactId="EBI-751001">
        <id>Q14145</id>
    </interactant>
    <interactant intactId="EBI-715104">
        <id>Q9NX09</id>
        <label>DDIT4</label>
    </interactant>
    <organismsDiffer>false</organismsDiffer>
    <experiments>3</experiments>
</comment>
<comment type="interaction">
    <interactant intactId="EBI-751001">
        <id>Q14145</id>
    </interactant>
    <interactant intactId="EBI-718333">
        <id>Q9NY33</id>
        <label>DPP3</label>
    </interactant>
    <organismsDiffer>false</organismsDiffer>
    <experiments>13</experiments>
</comment>
<comment type="interaction">
    <interactant intactId="EBI-751001">
        <id>Q14145</id>
    </interactant>
    <interactant intactId="EBI-769261">
        <id>Q96JC9</id>
        <label>EAF1</label>
    </interactant>
    <organismsDiffer>false</organismsDiffer>
    <experiments>3</experiments>
</comment>
<comment type="interaction">
    <interactant intactId="EBI-751001">
        <id>Q14145</id>
    </interactant>
    <interactant intactId="EBI-11343491">
        <id>Q6P6B1</id>
        <label>ERICH5</label>
    </interactant>
    <organismsDiffer>false</organismsDiffer>
    <experiments>3</experiments>
</comment>
<comment type="interaction">
    <interactant intactId="EBI-751001">
        <id>Q14145</id>
    </interactant>
    <interactant intactId="EBI-750990">
        <id>P62495</id>
        <label>ETF1</label>
    </interactant>
    <organismsDiffer>false</organismsDiffer>
    <experiments>8</experiments>
</comment>
<comment type="interaction">
    <interactant intactId="EBI-751001">
        <id>Q14145</id>
    </interactant>
    <interactant intactId="EBI-3893327">
        <id>Q6P1L5</id>
        <label>FAM117B</label>
    </interactant>
    <organismsDiffer>false</organismsDiffer>
    <experiments>6</experiments>
</comment>
<comment type="interaction">
    <interactant intactId="EBI-751001">
        <id>Q14145</id>
    </interactant>
    <interactant intactId="EBI-10232920">
        <id>Q14440</id>
        <label>GPErik</label>
    </interactant>
    <organismsDiffer>false</organismsDiffer>
    <experiments>3</experiments>
</comment>
<comment type="interaction">
    <interactant intactId="EBI-751001">
        <id>Q14145</id>
    </interactant>
    <interactant intactId="EBI-11955647">
        <id>Q8TDV0</id>
        <label>GPR151</label>
    </interactant>
    <organismsDiffer>false</organismsDiffer>
    <experiments>3</experiments>
</comment>
<comment type="interaction">
    <interactant intactId="EBI-751001">
        <id>Q14145</id>
    </interactant>
    <interactant intactId="EBI-747754">
        <id>P28799</id>
        <label>GRN</label>
    </interactant>
    <organismsDiffer>false</organismsDiffer>
    <experiments>3</experiments>
</comment>
<comment type="interaction">
    <interactant intactId="EBI-751001">
        <id>Q14145</id>
    </interactant>
    <interactant intactId="EBI-12044847">
        <id>A0A0C4DFT7</id>
        <label>GYPA</label>
    </interactant>
    <organismsDiffer>false</organismsDiffer>
    <experiments>3</experiments>
</comment>
<comment type="interaction">
    <interactant intactId="EBI-751001">
        <id>Q14145</id>
    </interactant>
    <interactant intactId="EBI-10176190">
        <id>B8Q183</id>
        <label>GYPA</label>
    </interactant>
    <organismsDiffer>false</organismsDiffer>
    <experiments>4</experiments>
</comment>
<comment type="interaction">
    <interactant intactId="EBI-751001">
        <id>Q14145</id>
    </interactant>
    <interactant intactId="EBI-702665">
        <id>P02724</id>
        <label>GYPA</label>
    </interactant>
    <organismsDiffer>false</organismsDiffer>
    <experiments>4</experiments>
</comment>
<comment type="interaction">
    <interactant intactId="EBI-751001">
        <id>Q14145</id>
    </interactant>
    <interactant intactId="EBI-1035358">
        <id>P05362</id>
        <label>ICAM1</label>
    </interactant>
    <organismsDiffer>false</organismsDiffer>
    <experiments>3</experiments>
</comment>
<comment type="interaction">
    <interactant intactId="EBI-751001">
        <id>Q14145</id>
    </interactant>
    <interactant intactId="EBI-6115771">
        <id>Q9BYX4</id>
        <label>IFIH1</label>
    </interactant>
    <organismsDiffer>false</organismsDiffer>
    <experiments>3</experiments>
</comment>
<comment type="interaction">
    <interactant intactId="EBI-751001">
        <id>Q14145</id>
    </interactant>
    <interactant intactId="EBI-81266">
        <id>O14920</id>
        <label>IKBKB</label>
    </interactant>
    <organismsDiffer>false</organismsDiffer>
    <experiments>6</experiments>
</comment>
<comment type="interaction">
    <interactant intactId="EBI-751001">
        <id>Q14145</id>
    </interactant>
    <interactant intactId="EBI-12206419">
        <id>Q4KMZ1</id>
        <label>IQCC</label>
    </interactant>
    <organismsDiffer>false</organismsDiffer>
    <experiments>3</experiments>
</comment>
<comment type="interaction">
    <interactant intactId="EBI-751001">
        <id>Q14145</id>
    </interactant>
    <interactant intactId="EBI-300173">
        <id>P05107</id>
        <label>ITGB2</label>
    </interactant>
    <organismsDiffer>false</organismsDiffer>
    <experiments>3</experiments>
</comment>
<comment type="interaction">
    <interactant intactId="EBI-751001">
        <id>Q14145</id>
    </interactant>
    <interactant intactId="EBI-746999">
        <id>O95198</id>
        <label>KLHL2</label>
    </interactant>
    <organismsDiffer>false</organismsDiffer>
    <experiments>7</experiments>
</comment>
<comment type="interaction">
    <interactant intactId="EBI-751001">
        <id>Q14145</id>
    </interactant>
    <interactant intactId="EBI-10230467">
        <id>Q8N4I8</id>
        <label>KLHL3</label>
    </interactant>
    <organismsDiffer>false</organismsDiffer>
    <experiments>3</experiments>
</comment>
<comment type="interaction">
    <interactant intactId="EBI-751001">
        <id>Q14145</id>
    </interactant>
    <interactant intactId="EBI-8524663">
        <id>Q9UH77</id>
        <label>KLHL3</label>
    </interactant>
    <organismsDiffer>false</organismsDiffer>
    <experiments>5</experiments>
</comment>
<comment type="interaction">
    <interactant intactId="EBI-751001">
        <id>Q14145</id>
    </interactant>
    <interactant intactId="EBI-348239">
        <id>P62310</id>
        <label>LSM3</label>
    </interactant>
    <organismsDiffer>false</organismsDiffer>
    <experiments>6</experiments>
</comment>
<comment type="interaction">
    <interactant intactId="EBI-751001">
        <id>Q14145</id>
    </interactant>
    <interactant intactId="EBI-78203">
        <id>Q13257</id>
        <label>MAD2L1</label>
    </interactant>
    <organismsDiffer>false</organismsDiffer>
    <experiments>8</experiments>
</comment>
<comment type="interaction">
    <interactant intactId="EBI-751001">
        <id>Q14145</id>
    </interactant>
    <interactant intactId="EBI-947402">
        <id>O60336</id>
        <label>MAPKBP1</label>
    </interactant>
    <organismsDiffer>false</organismsDiffer>
    <experiments>3</experiments>
</comment>
<comment type="interaction">
    <interactant intactId="EBI-751001">
        <id>Q14145</id>
    </interactant>
    <interactant intactId="EBI-9384556">
        <id>Q9BTE3-2</id>
        <label>MCMBP</label>
    </interactant>
    <organismsDiffer>false</organismsDiffer>
    <experiments>3</experiments>
</comment>
<comment type="interaction">
    <interactant intactId="EBI-751001">
        <id>Q14145</id>
    </interactant>
    <interactant intactId="EBI-2804436">
        <id>Q14494</id>
        <label>NFE2L1</label>
    </interactant>
    <organismsDiffer>false</organismsDiffer>
    <experiments>28</experiments>
</comment>
<comment type="interaction">
    <interactant intactId="EBI-751001">
        <id>Q14145</id>
    </interactant>
    <interactant intactId="EBI-2007911">
        <id>Q16236</id>
        <label>NFE2L2</label>
    </interactant>
    <organismsDiffer>false</organismsDiffer>
    <experiments>39</experiments>
</comment>
<comment type="interaction">
    <interactant intactId="EBI-751001">
        <id>Q14145</id>
    </interactant>
    <interactant intactId="EBI-2514593">
        <id>Q96TA1</id>
        <label>NIBAN2</label>
    </interactant>
    <organismsDiffer>false</organismsDiffer>
    <experiments>9</experiments>
</comment>
<comment type="interaction">
    <interactant intactId="EBI-751001">
        <id>Q14145</id>
    </interactant>
    <interactant intactId="EBI-741158">
        <id>Q96HA8</id>
        <label>NTAQ1</label>
    </interactant>
    <organismsDiffer>false</organismsDiffer>
    <experiments>3</experiments>
</comment>
<comment type="interaction">
    <interactant intactId="EBI-751001">
        <id>Q14145</id>
    </interactant>
    <interactant intactId="EBI-4280066">
        <id>Q9NZJ9</id>
        <label>NUDT4</label>
    </interactant>
    <organismsDiffer>false</organismsDiffer>
    <experiments>3</experiments>
</comment>
<comment type="interaction">
    <interactant intactId="EBI-751001">
        <id>Q14145</id>
    </interactant>
    <interactant intactId="EBI-2371082">
        <id>Q9UKX7</id>
        <label>NUP50</label>
    </interactant>
    <organismsDiffer>false</organismsDiffer>
    <experiments>3</experiments>
</comment>
<comment type="interaction">
    <interactant intactId="EBI-751001">
        <id>Q14145</id>
    </interactant>
    <interactant intactId="EBI-10265887">
        <id>Q8N573-5</id>
        <label>OXR1</label>
    </interactant>
    <organismsDiffer>false</organismsDiffer>
    <experiments>3</experiments>
</comment>
<comment type="interaction">
    <interactant intactId="EBI-751001">
        <id>Q14145</id>
    </interactant>
    <interactant intactId="EBI-1222653">
        <id>Q86YC2</id>
        <label>PALB2</label>
    </interactant>
    <organismsDiffer>false</organismsDiffer>
    <experiments>6</experiments>
</comment>
<comment type="interaction">
    <interactant intactId="EBI-751001">
        <id>Q14145</id>
    </interactant>
    <interactant intactId="EBI-297903">
        <id>Q15149</id>
        <label>PLEC</label>
    </interactant>
    <organismsDiffer>false</organismsDiffer>
    <experiments>3</experiments>
</comment>
<comment type="interaction">
    <interactant intactId="EBI-751001">
        <id>Q14145</id>
    </interactant>
    <interactant intactId="EBI-1181439">
        <id>P54619</id>
        <label>PRKAG1</label>
    </interactant>
    <organismsDiffer>false</organismsDiffer>
    <experiments>6</experiments>
</comment>
<comment type="interaction">
    <interactant intactId="EBI-751001">
        <id>Q14145</id>
    </interactant>
    <interactant intactId="EBI-10194874">
        <id>P06454-2</id>
        <label>PTMA</label>
    </interactant>
    <organismsDiffer>false</organismsDiffer>
    <experiments>6</experiments>
</comment>
<comment type="interaction">
    <interactant intactId="EBI-751001">
        <id>Q14145</id>
    </interactant>
    <interactant intactId="EBI-10253121">
        <id>Q6P9E2</id>
        <label>RECK</label>
    </interactant>
    <organismsDiffer>false</organismsDiffer>
    <experiments>6</experiments>
</comment>
<comment type="interaction">
    <interactant intactId="EBI-751001">
        <id>Q14145</id>
    </interactant>
    <interactant intactId="EBI-73886">
        <id>Q04206</id>
        <label>RELA</label>
    </interactant>
    <organismsDiffer>false</organismsDiffer>
    <experiments>4</experiments>
</comment>
<comment type="interaction">
    <interactant intactId="EBI-751001">
        <id>Q14145</id>
    </interactant>
    <interactant intactId="EBI-3939642">
        <id>P58004</id>
        <label>SESN2</label>
    </interactant>
    <organismsDiffer>false</organismsDiffer>
    <experiments>3</experiments>
</comment>
<comment type="interaction">
    <interactant intactId="EBI-751001">
        <id>Q14145</id>
    </interactant>
    <interactant intactId="EBI-358489">
        <id>Q96GM5</id>
        <label>SMARCD1</label>
    </interactant>
    <organismsDiffer>false</organismsDiffer>
    <experiments>3</experiments>
</comment>
<comment type="interaction">
    <interactant intactId="EBI-751001">
        <id>Q14145</id>
    </interactant>
    <interactant intactId="EBI-5235340">
        <id>Q7Z699</id>
        <label>SPRED1</label>
    </interactant>
    <organismsDiffer>false</organismsDiffer>
    <experiments>3</experiments>
</comment>
<comment type="interaction">
    <interactant intactId="EBI-751001">
        <id>Q14145</id>
    </interactant>
    <interactant intactId="EBI-307104">
        <id>Q13501</id>
        <label>SQSTM1</label>
    </interactant>
    <organismsDiffer>false</organismsDiffer>
    <experiments>21</experiments>
</comment>
<comment type="interaction">
    <interactant intactId="EBI-751001">
        <id>Q14145</id>
    </interactant>
    <interactant intactId="EBI-1553984">
        <id>Q9UGK3</id>
        <label>STAP2</label>
    </interactant>
    <organismsDiffer>false</organismsDiffer>
    <experiments>3</experiments>
</comment>
<comment type="interaction">
    <interactant intactId="EBI-751001">
        <id>Q14145</id>
    </interactant>
    <interactant intactId="EBI-3258000">
        <id>Q9P0N9</id>
        <label>TBC1D7</label>
    </interactant>
    <organismsDiffer>false</organismsDiffer>
    <experiments>3</experiments>
</comment>
<comment type="interaction">
    <interactant intactId="EBI-751001">
        <id>Q14145</id>
    </interactant>
    <interactant intactId="EBI-710997">
        <id>P54274</id>
        <label>TERF1</label>
    </interactant>
    <organismsDiffer>false</organismsDiffer>
    <experiments>2</experiments>
</comment>
<comment type="interaction">
    <interactant intactId="EBI-751001">
        <id>Q14145</id>
    </interactant>
    <interactant intactId="EBI-739485">
        <id>Q9Y3Q8</id>
        <label>TSC22D4</label>
    </interactant>
    <organismsDiffer>false</organismsDiffer>
    <experiments>4</experiments>
</comment>
<comment type="interaction">
    <interactant intactId="EBI-751001">
        <id>Q14145</id>
    </interactant>
    <interactant intactId="EBI-7705033">
        <id>Q9BRX9</id>
        <label>WDR83</label>
    </interactant>
    <organismsDiffer>false</organismsDiffer>
    <experiments>7</experiments>
</comment>
<comment type="interaction">
    <interactant intactId="EBI-751001">
        <id>Q14145</id>
    </interactant>
    <interactant intactId="EBI-720609">
        <id>O76024</id>
        <label>WFS1</label>
    </interactant>
    <organismsDiffer>false</organismsDiffer>
    <experiments>3</experiments>
</comment>
<comment type="interaction">
    <interactant intactId="EBI-751001">
        <id>Q14145</id>
    </interactant>
    <interactant intactId="EBI-310886">
        <id>Q9P202</id>
        <label>WHRN</label>
    </interactant>
    <organismsDiffer>false</organismsDiffer>
    <experiments>3</experiments>
</comment>
<comment type="interaction">
    <interactant intactId="EBI-751001">
        <id>Q14145</id>
    </interactant>
    <interactant intactId="EBI-1228269">
        <id>P58317</id>
        <label>ZNF121</label>
    </interactant>
    <organismsDiffer>false</organismsDiffer>
    <experiments>3</experiments>
</comment>
<comment type="interaction">
    <interactant intactId="EBI-751001">
        <id>Q14145</id>
    </interactant>
    <interactant intactId="EBI-739949">
        <id>Q9NX65</id>
        <label>ZSCAN32</label>
    </interactant>
    <organismsDiffer>false</organismsDiffer>
    <experiments>3</experiments>
</comment>
<comment type="interaction">
    <interactant intactId="EBI-751001">
        <id>Q14145</id>
    </interactant>
    <interactant intactId="EBI-447960">
        <id>O88351</id>
        <label>Ikbkb</label>
    </interactant>
    <organismsDiffer>true</organismsDiffer>
    <experiments>2</experiments>
</comment>
<comment type="interaction">
    <interactant intactId="EBI-751001">
        <id>Q14145</id>
    </interactant>
    <interactant intactId="EBI-6115486">
        <id>P15314</id>
        <label>Irf1</label>
    </interactant>
    <organismsDiffer>true</organismsDiffer>
    <experiments>2</experiments>
</comment>
<comment type="interaction">
    <interactant intactId="EBI-751001">
        <id>Q14145</id>
    </interactant>
    <interactant intactId="EBI-645025">
        <id>Q64337</id>
        <label>Sqstm1</label>
    </interactant>
    <organismsDiffer>true</organismsDiffer>
    <experiments>2</experiments>
</comment>
<comment type="subcellular location">
    <subcellularLocation>
        <location evidence="3 4 6 7 19">Cytoplasm</location>
    </subcellularLocation>
    <subcellularLocation>
        <location evidence="7">Nucleus</location>
    </subcellularLocation>
    <text evidence="6 21">Mainly cytoplasmic (PubMed:15601839). In response to selective autophagy, relocalizes to inclusion bodies following interaction with SQSTM1/p62 (PubMed:20452972).</text>
</comment>
<comment type="tissue specificity">
    <text evidence="4">Broadly expressed, with highest levels in skeletal muscle.</text>
</comment>
<comment type="domain">
    <text evidence="16 17 20 29 30">KEAP1 contains reactive cysteine residues that act as sensors for endogenously produced and exogenously encountered small molecules, which react with sulfhydryl groups and modify the cysteine sensors, leading to impair ability of the BCR(KEAP1) complex to ubiquitinate target proteins.</text>
</comment>
<comment type="domain">
    <text evidence="15">The Kelch repeats mediate interaction with NFE2L2/NRF2, BPTF and PGAM5.</text>
</comment>
<comment type="PTM">
    <text evidence="1 16 17 29 30">Non-enzymatic covalent modifications of reactive cysteines by electrophile metabolites inactivate the BCR(KEAP1) complex (PubMed:17127771, PubMed:18251510, PubMed:29590092, PubMed:30323285). Accumulation of fumarate promotes the formation of cysteine S-succination (S-(2-succinyl)cysteine), leading to inactivate the BCR(KEAP1) complex and promote NFE2L2/NRF2 nuclear accumulation and activation (By similarity). Nitric oxide-dependent 8-Nitro-cGMP formation promotes cysteine guanylation (S-cGMP-cysteine), leading to NFE2L2/NRF2 nuclear accumulation and activation (By similarity). Itaconate, an anti-inflammatory metabolite generated in response to lipopolysaccharide, alkylates cysteines, activating NFE2L2/NRF2 (PubMed:29590092). Methylglyoxal, a reactive metabolite that accumulates when the glycolytic enzyme PGK1 is inhibited, promotes formation of a methylimidazole cross-link between proximal Cys-151 and Arg-135 on another KEAP1 molecule, resulting in an inactive dimer that inactivates the BCR(KEAP1) complex (PubMed:30323285).</text>
</comment>
<comment type="PTM">
    <text evidence="8 21">Degraded via a proteasomal-independent process during selective autophagy: interaction with phosphorylated SQSTM1/p62 sequesters KEAP1 in inclusion bodies, leading to its degradation.</text>
</comment>
<comment type="PTM">
    <text evidence="5 8 31 32 33">Auto-ubiquitinated by the BCR(KEAP1) complex (PubMed:15572695, PubMed:15983046). Quinone-induced oxidative stress, but not sulforaphane, increases its ubiquitination (PubMed:15572695, PubMed:15983046). Ubiquitination and subsequent degradation is most pronounced following prolonged exposure of cells to oxidative stress, particularly in glutathione-deficient cells that are highly susceptible to oxidative stress (PubMed:15572695, PubMed:15983046). Deubiquitinated by USP25; leading to stabilization (PubMed:37339955). Ubiquitinated by TRIM25; leading to degradation upon ER stress (PubMed:31953436, PubMed:36882524).</text>
</comment>
<comment type="similarity">
    <text evidence="38">Belongs to the KEAP1 family.</text>
</comment>
<comment type="caution">
    <text evidence="1 9 16 17 26">The mechanism of inactivation of the BCR(KEAP1) complex by covalent modifications of reactive cysteines is unclear. Covalent modifications were initially thought to disrupt interaction between KEAP1 and NFE2L2/NRF2 (By similarity). Recent publications suggest that cysteine modifications disrupt the interaction between KEAP1 and CUL3 without affecting the interaction between KEAP1 and NFE2L2/NRF2 (PubMed:16006525, PubMed:17127771, PubMed:18251510, PubMed:24896564).</text>
</comment>
<comment type="sequence caution" evidence="38">
    <conflict type="erroneous initiation">
        <sequence resource="EMBL-CDS" id="BAA09481"/>
    </conflict>
    <text>Extended N-terminus.</text>
</comment>
<evidence type="ECO:0000250" key="1">
    <source>
        <dbReference type="UniProtKB" id="Q9Z2X8"/>
    </source>
</evidence>
<evidence type="ECO:0000255" key="2">
    <source>
        <dbReference type="PROSITE-ProRule" id="PRU00037"/>
    </source>
</evidence>
<evidence type="ECO:0000269" key="3">
    <source>
    </source>
</evidence>
<evidence type="ECO:0000269" key="4">
    <source>
    </source>
</evidence>
<evidence type="ECO:0000269" key="5">
    <source>
    </source>
</evidence>
<evidence type="ECO:0000269" key="6">
    <source>
    </source>
</evidence>
<evidence type="ECO:0000269" key="7">
    <source>
    </source>
</evidence>
<evidence type="ECO:0000269" key="8">
    <source>
    </source>
</evidence>
<evidence type="ECO:0000269" key="9">
    <source>
    </source>
</evidence>
<evidence type="ECO:0000269" key="10">
    <source>
    </source>
</evidence>
<evidence type="ECO:0000269" key="11">
    <source>
    </source>
</evidence>
<evidence type="ECO:0000269" key="12">
    <source>
    </source>
</evidence>
<evidence type="ECO:0000269" key="13">
    <source>
    </source>
</evidence>
<evidence type="ECO:0000269" key="14">
    <source>
    </source>
</evidence>
<evidence type="ECO:0000269" key="15">
    <source>
    </source>
</evidence>
<evidence type="ECO:0000269" key="16">
    <source>
    </source>
</evidence>
<evidence type="ECO:0000269" key="17">
    <source>
    </source>
</evidence>
<evidence type="ECO:0000269" key="18">
    <source>
    </source>
</evidence>
<evidence type="ECO:0000269" key="19">
    <source>
    </source>
</evidence>
<evidence type="ECO:0000269" key="20">
    <source>
    </source>
</evidence>
<evidence type="ECO:0000269" key="21">
    <source>
    </source>
</evidence>
<evidence type="ECO:0000269" key="22">
    <source>
    </source>
</evidence>
<evidence type="ECO:0000269" key="23">
    <source>
    </source>
</evidence>
<evidence type="ECO:0000269" key="24">
    <source>
    </source>
</evidence>
<evidence type="ECO:0000269" key="25">
    <source>
    </source>
</evidence>
<evidence type="ECO:0000269" key="26">
    <source>
    </source>
</evidence>
<evidence type="ECO:0000269" key="27">
    <source>
    </source>
</evidence>
<evidence type="ECO:0000269" key="28">
    <source>
    </source>
</evidence>
<evidence type="ECO:0000269" key="29">
    <source>
    </source>
</evidence>
<evidence type="ECO:0000269" key="30">
    <source>
    </source>
</evidence>
<evidence type="ECO:0000269" key="31">
    <source>
    </source>
</evidence>
<evidence type="ECO:0000269" key="32">
    <source>
    </source>
</evidence>
<evidence type="ECO:0000269" key="33">
    <source>
    </source>
</evidence>
<evidence type="ECO:0000269" key="34">
    <source>
    </source>
</evidence>
<evidence type="ECO:0000303" key="35">
    <source>
    </source>
</evidence>
<evidence type="ECO:0000303" key="36">
    <source>
    </source>
</evidence>
<evidence type="ECO:0000303" key="37">
    <source ref="1"/>
</evidence>
<evidence type="ECO:0000305" key="38"/>
<evidence type="ECO:0000312" key="39">
    <source>
        <dbReference type="HGNC" id="HGNC:23177"/>
    </source>
</evidence>
<evidence type="ECO:0007744" key="40">
    <source>
        <dbReference type="PDB" id="4CXI"/>
    </source>
</evidence>
<evidence type="ECO:0007744" key="41">
    <source>
        <dbReference type="PDB" id="4CXJ"/>
    </source>
</evidence>
<evidence type="ECO:0007744" key="42">
    <source>
        <dbReference type="PDB" id="4CXT"/>
    </source>
</evidence>
<evidence type="ECO:0007829" key="43">
    <source>
        <dbReference type="PDB" id="1ZGK"/>
    </source>
</evidence>
<evidence type="ECO:0007829" key="44">
    <source>
        <dbReference type="PDB" id="2FLU"/>
    </source>
</evidence>
<evidence type="ECO:0007829" key="45">
    <source>
        <dbReference type="PDB" id="5DAD"/>
    </source>
</evidence>
<evidence type="ECO:0007829" key="46">
    <source>
        <dbReference type="PDB" id="5F72"/>
    </source>
</evidence>
<evidence type="ECO:0007829" key="47">
    <source>
        <dbReference type="PDB" id="5NLB"/>
    </source>
</evidence>
<evidence type="ECO:0007829" key="48">
    <source>
        <dbReference type="PDB" id="6HWS"/>
    </source>
</evidence>
<evidence type="ECO:0007829" key="49">
    <source>
        <dbReference type="PDB" id="7EXI"/>
    </source>
</evidence>
<evidence type="ECO:0007829" key="50">
    <source>
        <dbReference type="PDB" id="7X4W"/>
    </source>
</evidence>
<evidence type="ECO:0007829" key="51">
    <source>
        <dbReference type="PDB" id="7X4X"/>
    </source>
</evidence>
<accession>Q14145</accession>
<accession>B3KPD5</accession>
<accession>Q6LEP0</accession>
<accession>Q8WTX1</accession>
<accession>Q9BPY9</accession>
<sequence length="624" mass="69666">MQPDPRPSGAGACCRFLPLQSQCPEGAGDAVMYASTECKAEVTPSQHGNRTFSYTLEDHTKQAFGIMNELRLSQQLCDVTLQVKYQDAPAAQFMAHKVVLASSSPVFKAMFTNGLREQGMEVVSIEGIHPKVMERLIEFAYTASISMGEKCVLHVMNGAVMYQIDSVVRACSDFLVQQLDPSNAIGIANFAEQIGCVELHQRAREYIYMHFGEVAKQEEFFNLSHCQLVTLISRDDLNVRCESEVFHACINWVKYDCEQRRFYVQALLRAVRCHSLTPNFLQMQLQKCEILQSDSRCKDYLVKIFEELTLHKPTQVMPCRAPKVGRLIYTAGGYFRQSLSYLEAYNPSDGTWLRLADLQVPRSGLAGCVVGGLLYAVGGRNNSPDGNTDSSALDCYNPMTNQWSPCAPMSVPRNRIGVGVIDGHIYAVGGSHGCIHHNSVERYEPERDEWHLVAPMLTRRIGVGVAVLNRLLYAVGGFDGTNRLNSAECYYPERNEWRMITAMNTIRSGAGVCVLHNCIYAAGGYDGQDQLNSVERYDVETETWTFVAPMKHRRSALGITVHQGRIYVLGGYDGHTFLDSVECYDPDTDTWSEVTRMTSGRSGVGVAVTMEPCRKQIDQQNCTC</sequence>
<proteinExistence type="evidence at protein level"/>
<organism>
    <name type="scientific">Homo sapiens</name>
    <name type="common">Human</name>
    <dbReference type="NCBI Taxonomy" id="9606"/>
    <lineage>
        <taxon>Eukaryota</taxon>
        <taxon>Metazoa</taxon>
        <taxon>Chordata</taxon>
        <taxon>Craniata</taxon>
        <taxon>Vertebrata</taxon>
        <taxon>Euteleostomi</taxon>
        <taxon>Mammalia</taxon>
        <taxon>Eutheria</taxon>
        <taxon>Euarchontoglires</taxon>
        <taxon>Primates</taxon>
        <taxon>Haplorrhini</taxon>
        <taxon>Catarrhini</taxon>
        <taxon>Hominidae</taxon>
        <taxon>Homo</taxon>
    </lineage>
</organism>
<gene>
    <name evidence="35 39" type="primary">KEAP1</name>
    <name evidence="37" type="synonym">INRF2</name>
    <name evidence="36" type="synonym">KIAA0132</name>
    <name evidence="39" type="synonym">KLHL19</name>
</gene>
<protein>
    <recommendedName>
        <fullName evidence="35">Kelch-like ECH-associated protein 1</fullName>
    </recommendedName>
    <alternativeName>
        <fullName evidence="37">Cytosolic inhibitor of Nrf2</fullName>
        <shortName evidence="37">INrf2</shortName>
    </alternativeName>
    <alternativeName>
        <fullName evidence="39">Kelch-like protein 19</fullName>
    </alternativeName>
</protein>
<dbReference type="EMBL" id="AF361892">
    <property type="protein sequence ID" value="AAK43722.1"/>
    <property type="molecule type" value="Genomic_DNA"/>
</dbReference>
<dbReference type="EMBL" id="AF361888">
    <property type="protein sequence ID" value="AAK43722.1"/>
    <property type="status" value="JOINED"/>
    <property type="molecule type" value="Genomic_DNA"/>
</dbReference>
<dbReference type="EMBL" id="AF361889">
    <property type="protein sequence ID" value="AAK43722.1"/>
    <property type="status" value="JOINED"/>
    <property type="molecule type" value="Genomic_DNA"/>
</dbReference>
<dbReference type="EMBL" id="AF361890">
    <property type="protein sequence ID" value="AAK43722.1"/>
    <property type="status" value="JOINED"/>
    <property type="molecule type" value="Genomic_DNA"/>
</dbReference>
<dbReference type="EMBL" id="AF361891">
    <property type="protein sequence ID" value="AAK43722.1"/>
    <property type="status" value="JOINED"/>
    <property type="molecule type" value="Genomic_DNA"/>
</dbReference>
<dbReference type="EMBL" id="AF361886">
    <property type="protein sequence ID" value="AAK51082.1"/>
    <property type="molecule type" value="mRNA"/>
</dbReference>
<dbReference type="EMBL" id="D50922">
    <property type="protein sequence ID" value="BAA09481.3"/>
    <property type="status" value="ALT_INIT"/>
    <property type="molecule type" value="mRNA"/>
</dbReference>
<dbReference type="EMBL" id="AK056204">
    <property type="protein sequence ID" value="BAG51647.1"/>
    <property type="molecule type" value="mRNA"/>
</dbReference>
<dbReference type="EMBL" id="AC011461">
    <property type="status" value="NOT_ANNOTATED_CDS"/>
    <property type="molecule type" value="Genomic_DNA"/>
</dbReference>
<dbReference type="EMBL" id="BC002417">
    <property type="protein sequence ID" value="AAH02417.1"/>
    <property type="molecule type" value="mRNA"/>
</dbReference>
<dbReference type="EMBL" id="BC002930">
    <property type="protein sequence ID" value="AAH02930.1"/>
    <property type="molecule type" value="mRNA"/>
</dbReference>
<dbReference type="EMBL" id="BC015945">
    <property type="protein sequence ID" value="AAH15945.1"/>
    <property type="molecule type" value="mRNA"/>
</dbReference>
<dbReference type="EMBL" id="BC021957">
    <property type="protein sequence ID" value="AAH21957.2"/>
    <property type="molecule type" value="mRNA"/>
</dbReference>
<dbReference type="CCDS" id="CCDS12239.1"/>
<dbReference type="RefSeq" id="NP_036421.2">
    <property type="nucleotide sequence ID" value="NM_012289.3"/>
</dbReference>
<dbReference type="RefSeq" id="NP_987096.1">
    <property type="nucleotide sequence ID" value="NM_203500.2"/>
</dbReference>
<dbReference type="RefSeq" id="XP_005260230.1">
    <property type="nucleotide sequence ID" value="XM_005260173.1"/>
</dbReference>
<dbReference type="RefSeq" id="XP_005260231.1">
    <property type="nucleotide sequence ID" value="XM_005260174.1"/>
</dbReference>
<dbReference type="RefSeq" id="XP_011526754.1">
    <property type="nucleotide sequence ID" value="XM_011528452.1"/>
</dbReference>
<dbReference type="PDB" id="1U6D">
    <property type="method" value="X-ray"/>
    <property type="resolution" value="1.85 A"/>
    <property type="chains" value="X=321-609"/>
</dbReference>
<dbReference type="PDB" id="1ZGK">
    <property type="method" value="X-ray"/>
    <property type="resolution" value="1.35 A"/>
    <property type="chains" value="A=321-609"/>
</dbReference>
<dbReference type="PDB" id="2FLU">
    <property type="method" value="X-ray"/>
    <property type="resolution" value="1.50 A"/>
    <property type="chains" value="X=321-609"/>
</dbReference>
<dbReference type="PDB" id="3VNG">
    <property type="method" value="X-ray"/>
    <property type="resolution" value="2.10 A"/>
    <property type="chains" value="A=321-609"/>
</dbReference>
<dbReference type="PDB" id="3VNH">
    <property type="method" value="X-ray"/>
    <property type="resolution" value="2.10 A"/>
    <property type="chains" value="A=321-609"/>
</dbReference>
<dbReference type="PDB" id="3ZGC">
    <property type="method" value="X-ray"/>
    <property type="resolution" value="2.20 A"/>
    <property type="chains" value="A/B=321-609"/>
</dbReference>
<dbReference type="PDB" id="3ZGD">
    <property type="method" value="X-ray"/>
    <property type="resolution" value="1.98 A"/>
    <property type="chains" value="A/B=321-609"/>
</dbReference>
<dbReference type="PDB" id="4CXI">
    <property type="method" value="X-ray"/>
    <property type="resolution" value="2.35 A"/>
    <property type="chains" value="A=48-180"/>
</dbReference>
<dbReference type="PDB" id="4CXJ">
    <property type="method" value="X-ray"/>
    <property type="resolution" value="2.80 A"/>
    <property type="chains" value="A=48-180"/>
</dbReference>
<dbReference type="PDB" id="4CXT">
    <property type="method" value="X-ray"/>
    <property type="resolution" value="2.66 A"/>
    <property type="chains" value="A=48-180"/>
</dbReference>
<dbReference type="PDB" id="4IFJ">
    <property type="method" value="X-ray"/>
    <property type="resolution" value="1.80 A"/>
    <property type="chains" value="A=321-609"/>
</dbReference>
<dbReference type="PDB" id="4IFL">
    <property type="method" value="X-ray"/>
    <property type="resolution" value="1.80 A"/>
    <property type="chains" value="X=321-609"/>
</dbReference>
<dbReference type="PDB" id="4IFN">
    <property type="method" value="X-ray"/>
    <property type="resolution" value="2.40 A"/>
    <property type="chains" value="X=321-609"/>
</dbReference>
<dbReference type="PDB" id="4IN4">
    <property type="method" value="X-ray"/>
    <property type="resolution" value="2.59 A"/>
    <property type="chains" value="A/B/C=321-609"/>
</dbReference>
<dbReference type="PDB" id="4IQK">
    <property type="method" value="X-ray"/>
    <property type="resolution" value="1.97 A"/>
    <property type="chains" value="A=321-609"/>
</dbReference>
<dbReference type="PDB" id="4L7B">
    <property type="method" value="X-ray"/>
    <property type="resolution" value="2.41 A"/>
    <property type="chains" value="A/B=321-609"/>
</dbReference>
<dbReference type="PDB" id="4L7C">
    <property type="method" value="X-ray"/>
    <property type="resolution" value="2.40 A"/>
    <property type="chains" value="A/B/C=321-609"/>
</dbReference>
<dbReference type="PDB" id="4L7D">
    <property type="method" value="X-ray"/>
    <property type="resolution" value="2.25 A"/>
    <property type="chains" value="A/B/C=321-609"/>
</dbReference>
<dbReference type="PDB" id="4N1B">
    <property type="method" value="X-ray"/>
    <property type="resolution" value="2.55 A"/>
    <property type="chains" value="A/B/C=321-609"/>
</dbReference>
<dbReference type="PDB" id="4XMB">
    <property type="method" value="X-ray"/>
    <property type="resolution" value="2.43 A"/>
    <property type="chains" value="A=321-609"/>
</dbReference>
<dbReference type="PDB" id="5DAD">
    <property type="method" value="X-ray"/>
    <property type="resolution" value="2.61 A"/>
    <property type="chains" value="A=49-182"/>
</dbReference>
<dbReference type="PDB" id="5DAF">
    <property type="method" value="X-ray"/>
    <property type="resolution" value="2.37 A"/>
    <property type="chains" value="A=49-182"/>
</dbReference>
<dbReference type="PDB" id="5F72">
    <property type="method" value="X-ray"/>
    <property type="resolution" value="1.85 A"/>
    <property type="chains" value="C/K=321-611"/>
</dbReference>
<dbReference type="PDB" id="5GIT">
    <property type="method" value="X-ray"/>
    <property type="resolution" value="2.19 A"/>
    <property type="chains" value="A=48-180"/>
</dbReference>
<dbReference type="PDB" id="5NLB">
    <property type="method" value="X-ray"/>
    <property type="resolution" value="3.45 A"/>
    <property type="chains" value="A=51-204"/>
</dbReference>
<dbReference type="PDB" id="5WFL">
    <property type="method" value="X-ray"/>
    <property type="resolution" value="1.93 A"/>
    <property type="chains" value="A/B=312-624"/>
</dbReference>
<dbReference type="PDB" id="5WFV">
    <property type="method" value="X-ray"/>
    <property type="resolution" value="1.91 A"/>
    <property type="chains" value="A/B=320-612"/>
</dbReference>
<dbReference type="PDB" id="5WG1">
    <property type="method" value="X-ray"/>
    <property type="resolution" value="2.02 A"/>
    <property type="chains" value="A/B=320-612"/>
</dbReference>
<dbReference type="PDB" id="5WHL">
    <property type="method" value="X-ray"/>
    <property type="resolution" value="2.50 A"/>
    <property type="chains" value="A/B=312-624"/>
</dbReference>
<dbReference type="PDB" id="5WHO">
    <property type="method" value="X-ray"/>
    <property type="resolution" value="2.23 A"/>
    <property type="chains" value="A/B=312-624"/>
</dbReference>
<dbReference type="PDB" id="5WIY">
    <property type="method" value="X-ray"/>
    <property type="resolution" value="2.23 A"/>
    <property type="chains" value="A/B=312-624"/>
</dbReference>
<dbReference type="PDB" id="5X54">
    <property type="method" value="X-ray"/>
    <property type="resolution" value="2.30 A"/>
    <property type="chains" value="A/B=321-609"/>
</dbReference>
<dbReference type="PDB" id="6FFM">
    <property type="method" value="X-ray"/>
    <property type="resolution" value="2.20 A"/>
    <property type="chains" value="A=48-180"/>
</dbReference>
<dbReference type="PDB" id="6FMP">
    <property type="method" value="X-ray"/>
    <property type="resolution" value="2.92 A"/>
    <property type="chains" value="A/B=321-609"/>
</dbReference>
<dbReference type="PDB" id="6FMQ">
    <property type="method" value="X-ray"/>
    <property type="resolution" value="2.10 A"/>
    <property type="chains" value="A/B=321-609"/>
</dbReference>
<dbReference type="PDB" id="6HWS">
    <property type="method" value="X-ray"/>
    <property type="resolution" value="1.75 A"/>
    <property type="chains" value="A=321-609"/>
</dbReference>
<dbReference type="PDB" id="6LRZ">
    <property type="method" value="X-ray"/>
    <property type="resolution" value="1.54 A"/>
    <property type="chains" value="A=311-616"/>
</dbReference>
<dbReference type="PDB" id="6ROG">
    <property type="method" value="X-ray"/>
    <property type="resolution" value="2.16 A"/>
    <property type="chains" value="A/X=321-609"/>
</dbReference>
<dbReference type="PDB" id="6SP1">
    <property type="method" value="X-ray"/>
    <property type="resolution" value="2.57 A"/>
    <property type="chains" value="A/B=321-609"/>
</dbReference>
<dbReference type="PDB" id="6SP4">
    <property type="method" value="X-ray"/>
    <property type="resolution" value="2.59 A"/>
    <property type="chains" value="A/B/C/D/E/F=321-609"/>
</dbReference>
<dbReference type="PDB" id="6T7V">
    <property type="method" value="X-ray"/>
    <property type="resolution" value="2.60 A"/>
    <property type="chains" value="A=321-609"/>
</dbReference>
<dbReference type="PDB" id="6T7Z">
    <property type="method" value="X-ray"/>
    <property type="resolution" value="2.00 A"/>
    <property type="chains" value="A=321-609"/>
</dbReference>
<dbReference type="PDB" id="6TG8">
    <property type="method" value="X-ray"/>
    <property type="resolution" value="2.75 A"/>
    <property type="chains" value="AAA=322-609"/>
</dbReference>
<dbReference type="PDB" id="6TYM">
    <property type="method" value="X-ray"/>
    <property type="resolution" value="1.42 A"/>
    <property type="chains" value="A=321-609"/>
</dbReference>
<dbReference type="PDB" id="6TYP">
    <property type="method" value="X-ray"/>
    <property type="resolution" value="2.50 A"/>
    <property type="chains" value="A=321-609"/>
</dbReference>
<dbReference type="PDB" id="6UF0">
    <property type="method" value="X-ray"/>
    <property type="resolution" value="1.96 A"/>
    <property type="chains" value="A/B=321-609"/>
</dbReference>
<dbReference type="PDB" id="6V6Z">
    <property type="method" value="X-ray"/>
    <property type="resolution" value="1.60 A"/>
    <property type="chains" value="A/B/C/D=321-609"/>
</dbReference>
<dbReference type="PDB" id="6W66">
    <property type="method" value="X-ray"/>
    <property type="resolution" value="3.21 A"/>
    <property type="chains" value="C=48-180"/>
</dbReference>
<dbReference type="PDB" id="6W67">
    <property type="method" value="X-ray"/>
    <property type="resolution" value="2.20 A"/>
    <property type="chains" value="A=48-180"/>
</dbReference>
<dbReference type="PDB" id="6W68">
    <property type="method" value="X-ray"/>
    <property type="resolution" value="2.55 A"/>
    <property type="chains" value="A=48-180"/>
</dbReference>
<dbReference type="PDB" id="6W69">
    <property type="method" value="X-ray"/>
    <property type="resolution" value="2.50 A"/>
    <property type="chains" value="A=48-180"/>
</dbReference>
<dbReference type="PDB" id="6WCQ">
    <property type="method" value="EM"/>
    <property type="resolution" value="8.50 A"/>
    <property type="chains" value="C=1-624"/>
</dbReference>
<dbReference type="PDB" id="6Z6A">
    <property type="method" value="X-ray"/>
    <property type="resolution" value="2.37 A"/>
    <property type="chains" value="A/B=321-609"/>
</dbReference>
<dbReference type="PDB" id="7EXI">
    <property type="method" value="X-ray"/>
    <property type="resolution" value="1.82 A"/>
    <property type="chains" value="A=45-180"/>
</dbReference>
<dbReference type="PDB" id="7K28">
    <property type="method" value="X-ray"/>
    <property type="resolution" value="2.15 A"/>
    <property type="chains" value="A/B=325-614"/>
</dbReference>
<dbReference type="PDB" id="7K29">
    <property type="method" value="X-ray"/>
    <property type="resolution" value="2.20 A"/>
    <property type="chains" value="A/B=324-624"/>
</dbReference>
<dbReference type="PDB" id="7K2A">
    <property type="method" value="X-ray"/>
    <property type="resolution" value="1.90 A"/>
    <property type="chains" value="A/B=324-624"/>
</dbReference>
<dbReference type="PDB" id="7K2B">
    <property type="method" value="X-ray"/>
    <property type="resolution" value="2.31 A"/>
    <property type="chains" value="A/B=324-624"/>
</dbReference>
<dbReference type="PDB" id="7K2C">
    <property type="method" value="X-ray"/>
    <property type="resolution" value="2.11 A"/>
    <property type="chains" value="A/B=325-614"/>
</dbReference>
<dbReference type="PDB" id="7K2D">
    <property type="method" value="X-ray"/>
    <property type="resolution" value="2.21 A"/>
    <property type="chains" value="A/B=324-623"/>
</dbReference>
<dbReference type="PDB" id="7K2E">
    <property type="method" value="X-ray"/>
    <property type="resolution" value="2.03 A"/>
    <property type="chains" value="A/B=324-624"/>
</dbReference>
<dbReference type="PDB" id="7K2F">
    <property type="method" value="X-ray"/>
    <property type="resolution" value="2.37 A"/>
    <property type="chains" value="A/X=312-623"/>
</dbReference>
<dbReference type="PDB" id="7K2G">
    <property type="method" value="X-ray"/>
    <property type="resolution" value="2.15 A"/>
    <property type="chains" value="A/B=324-624"/>
</dbReference>
<dbReference type="PDB" id="7K2H">
    <property type="method" value="X-ray"/>
    <property type="resolution" value="2.09 A"/>
    <property type="chains" value="A/B=324-624"/>
</dbReference>
<dbReference type="PDB" id="7K2I">
    <property type="method" value="X-ray"/>
    <property type="resolution" value="2.42 A"/>
    <property type="chains" value="A/B=324-623"/>
</dbReference>
<dbReference type="PDB" id="7K2J">
    <property type="method" value="X-ray"/>
    <property type="resolution" value="2.52 A"/>
    <property type="chains" value="A/B=325-614"/>
</dbReference>
<dbReference type="PDB" id="7K2K">
    <property type="method" value="X-ray"/>
    <property type="resolution" value="1.98 A"/>
    <property type="chains" value="A/B=324-624"/>
</dbReference>
<dbReference type="PDB" id="7K2L">
    <property type="method" value="X-ray"/>
    <property type="resolution" value="1.98 A"/>
    <property type="chains" value="A=326-609, B=326-614"/>
</dbReference>
<dbReference type="PDB" id="7K2M">
    <property type="method" value="X-ray"/>
    <property type="resolution" value="2.02 A"/>
    <property type="chains" value="A/B=326-614"/>
</dbReference>
<dbReference type="PDB" id="7K2N">
    <property type="method" value="X-ray"/>
    <property type="resolution" value="2.22 A"/>
    <property type="chains" value="A/B=324-624"/>
</dbReference>
<dbReference type="PDB" id="7K2O">
    <property type="method" value="X-ray"/>
    <property type="resolution" value="2.11 A"/>
    <property type="chains" value="A/B=324-624"/>
</dbReference>
<dbReference type="PDB" id="7K2P">
    <property type="method" value="X-ray"/>
    <property type="resolution" value="2.11 A"/>
    <property type="chains" value="A/B=324-624"/>
</dbReference>
<dbReference type="PDB" id="7K2Q">
    <property type="method" value="X-ray"/>
    <property type="resolution" value="2.37 A"/>
    <property type="chains" value="A/B=325-614"/>
</dbReference>
<dbReference type="PDB" id="7K2R">
    <property type="method" value="X-ray"/>
    <property type="resolution" value="2.10 A"/>
    <property type="chains" value="A/B=325-614"/>
</dbReference>
<dbReference type="PDB" id="7K2S">
    <property type="method" value="X-ray"/>
    <property type="resolution" value="2.13 A"/>
    <property type="chains" value="A/B=324-624"/>
</dbReference>
<dbReference type="PDB" id="7Q5H">
    <property type="method" value="X-ray"/>
    <property type="resolution" value="2.31 A"/>
    <property type="chains" value="A/B=321-609"/>
</dbReference>
<dbReference type="PDB" id="7Q6Q">
    <property type="method" value="X-ray"/>
    <property type="resolution" value="2.55 A"/>
    <property type="chains" value="A/B=321-609"/>
</dbReference>
<dbReference type="PDB" id="7Q6S">
    <property type="method" value="X-ray"/>
    <property type="resolution" value="2.14 A"/>
    <property type="chains" value="A/B=321-609"/>
</dbReference>
<dbReference type="PDB" id="7Q8R">
    <property type="method" value="X-ray"/>
    <property type="resolution" value="2.28 A"/>
    <property type="chains" value="A/B=321-609"/>
</dbReference>
<dbReference type="PDB" id="7Q96">
    <property type="method" value="X-ray"/>
    <property type="resolution" value="2.42 A"/>
    <property type="chains" value="A/B=321-609"/>
</dbReference>
<dbReference type="PDB" id="7X4W">
    <property type="method" value="X-ray"/>
    <property type="resolution" value="3.21 A"/>
    <property type="chains" value="A/B/C/D/E/F=48-180"/>
</dbReference>
<dbReference type="PDB" id="7X4X">
    <property type="method" value="X-ray"/>
    <property type="resolution" value="2.96 A"/>
    <property type="chains" value="A/B/C/D/E/F=48-180"/>
</dbReference>
<dbReference type="PDB" id="7XM2">
    <property type="method" value="X-ray"/>
    <property type="resolution" value="2.30 A"/>
    <property type="chains" value="X=321-609"/>
</dbReference>
<dbReference type="PDB" id="7XM3">
    <property type="method" value="X-ray"/>
    <property type="resolution" value="2.80 A"/>
    <property type="chains" value="A=321-609"/>
</dbReference>
<dbReference type="PDB" id="7XM4">
    <property type="method" value="X-ray"/>
    <property type="resolution" value="2.70 A"/>
    <property type="chains" value="A=321-609"/>
</dbReference>
<dbReference type="PDB" id="7XM5">
    <property type="method" value="X-ray"/>
    <property type="resolution" value="2.40 A"/>
    <property type="chains" value="A=321-609"/>
</dbReference>
<dbReference type="PDB" id="7XOT">
    <property type="method" value="X-ray"/>
    <property type="resolution" value="2.70 A"/>
    <property type="chains" value="A=321-609"/>
</dbReference>
<dbReference type="PDB" id="8EHV">
    <property type="method" value="X-ray"/>
    <property type="resolution" value="2.29 A"/>
    <property type="chains" value="A/B=312-624"/>
</dbReference>
<dbReference type="PDB" id="8EJR">
    <property type="method" value="X-ray"/>
    <property type="resolution" value="2.08 A"/>
    <property type="chains" value="A/B=312-624"/>
</dbReference>
<dbReference type="PDB" id="8EJS">
    <property type="method" value="X-ray"/>
    <property type="resolution" value="2.82 A"/>
    <property type="chains" value="A/B=312-624"/>
</dbReference>
<dbReference type="PDB" id="8IVG">
    <property type="method" value="X-ray"/>
    <property type="resolution" value="1.80 A"/>
    <property type="chains" value="A=310-624"/>
</dbReference>
<dbReference type="PDB" id="8IVR">
    <property type="method" value="X-ray"/>
    <property type="resolution" value="1.50 A"/>
    <property type="chains" value="A=310-624"/>
</dbReference>
<dbReference type="PDB" id="8IXS">
    <property type="method" value="X-ray"/>
    <property type="resolution" value="1.48 A"/>
    <property type="chains" value="A=310-624"/>
</dbReference>
<dbReference type="PDB" id="8PKS">
    <property type="method" value="X-ray"/>
    <property type="resolution" value="2.60 A"/>
    <property type="chains" value="A/B/C/D/E/F/G/H/I/J/K/L/M/N=471-609"/>
</dbReference>
<dbReference type="PDB" id="8PKU">
    <property type="method" value="X-ray"/>
    <property type="resolution" value="1.73 A"/>
    <property type="chains" value="A/B=312-623"/>
</dbReference>
<dbReference type="PDB" id="8PKV">
    <property type="method" value="X-ray"/>
    <property type="resolution" value="1.55 A"/>
    <property type="chains" value="A/B=312-623"/>
</dbReference>
<dbReference type="PDB" id="8PKW">
    <property type="method" value="X-ray"/>
    <property type="resolution" value="1.54 A"/>
    <property type="chains" value="A/B=312-623"/>
</dbReference>
<dbReference type="PDB" id="8PKX">
    <property type="method" value="X-ray"/>
    <property type="resolution" value="1.79 A"/>
    <property type="chains" value="A/B=312-623"/>
</dbReference>
<dbReference type="PDB" id="8WFG">
    <property type="method" value="X-ray"/>
    <property type="resolution" value="2.25 A"/>
    <property type="chains" value="A=48-180"/>
</dbReference>
<dbReference type="PDB" id="8X34">
    <property type="method" value="X-ray"/>
    <property type="resolution" value="2.80 A"/>
    <property type="chains" value="A/B=324-609"/>
</dbReference>
<dbReference type="PDB" id="8XGK">
    <property type="method" value="X-ray"/>
    <property type="resolution" value="1.32 A"/>
    <property type="chains" value="A=310-624"/>
</dbReference>
<dbReference type="PDB" id="8XGV">
    <property type="method" value="X-ray"/>
    <property type="resolution" value="1.42 A"/>
    <property type="chains" value="A=310-624"/>
</dbReference>
<dbReference type="PDB" id="9DU7">
    <property type="method" value="X-ray"/>
    <property type="resolution" value="1.87 A"/>
    <property type="chains" value="A/B=48-180"/>
</dbReference>
<dbReference type="PDB" id="9ETX">
    <property type="method" value="X-ray"/>
    <property type="resolution" value="2.34 A"/>
    <property type="chains" value="A/B=48-213"/>
</dbReference>
<dbReference type="PDB" id="9ETY">
    <property type="method" value="X-ray"/>
    <property type="resolution" value="1.87 A"/>
    <property type="chains" value="A/B=48-213"/>
</dbReference>
<dbReference type="PDBsum" id="1U6D"/>
<dbReference type="PDBsum" id="1ZGK"/>
<dbReference type="PDBsum" id="2FLU"/>
<dbReference type="PDBsum" id="3VNG"/>
<dbReference type="PDBsum" id="3VNH"/>
<dbReference type="PDBsum" id="3ZGC"/>
<dbReference type="PDBsum" id="3ZGD"/>
<dbReference type="PDBsum" id="4CXI"/>
<dbReference type="PDBsum" id="4CXJ"/>
<dbReference type="PDBsum" id="4CXT"/>
<dbReference type="PDBsum" id="4IFJ"/>
<dbReference type="PDBsum" id="4IFL"/>
<dbReference type="PDBsum" id="4IFN"/>
<dbReference type="PDBsum" id="4IN4"/>
<dbReference type="PDBsum" id="4IQK"/>
<dbReference type="PDBsum" id="4L7B"/>
<dbReference type="PDBsum" id="4L7C"/>
<dbReference type="PDBsum" id="4L7D"/>
<dbReference type="PDBsum" id="4N1B"/>
<dbReference type="PDBsum" id="4XMB"/>
<dbReference type="PDBsum" id="5DAD"/>
<dbReference type="PDBsum" id="5DAF"/>
<dbReference type="PDBsum" id="5F72"/>
<dbReference type="PDBsum" id="5GIT"/>
<dbReference type="PDBsum" id="5NLB"/>
<dbReference type="PDBsum" id="5WFL"/>
<dbReference type="PDBsum" id="5WFV"/>
<dbReference type="PDBsum" id="5WG1"/>
<dbReference type="PDBsum" id="5WHL"/>
<dbReference type="PDBsum" id="5WHO"/>
<dbReference type="PDBsum" id="5WIY"/>
<dbReference type="PDBsum" id="5X54"/>
<dbReference type="PDBsum" id="6FFM"/>
<dbReference type="PDBsum" id="6FMP"/>
<dbReference type="PDBsum" id="6FMQ"/>
<dbReference type="PDBsum" id="6HWS"/>
<dbReference type="PDBsum" id="6LRZ"/>
<dbReference type="PDBsum" id="6ROG"/>
<dbReference type="PDBsum" id="6SP1"/>
<dbReference type="PDBsum" id="6SP4"/>
<dbReference type="PDBsum" id="6T7V"/>
<dbReference type="PDBsum" id="6T7Z"/>
<dbReference type="PDBsum" id="6TG8"/>
<dbReference type="PDBsum" id="6TYM"/>
<dbReference type="PDBsum" id="6TYP"/>
<dbReference type="PDBsum" id="6UF0"/>
<dbReference type="PDBsum" id="6V6Z"/>
<dbReference type="PDBsum" id="6W66"/>
<dbReference type="PDBsum" id="6W67"/>
<dbReference type="PDBsum" id="6W68"/>
<dbReference type="PDBsum" id="6W69"/>
<dbReference type="PDBsum" id="6WCQ"/>
<dbReference type="PDBsum" id="6Z6A"/>
<dbReference type="PDBsum" id="7EXI"/>
<dbReference type="PDBsum" id="7K28"/>
<dbReference type="PDBsum" id="7K29"/>
<dbReference type="PDBsum" id="7K2A"/>
<dbReference type="PDBsum" id="7K2B"/>
<dbReference type="PDBsum" id="7K2C"/>
<dbReference type="PDBsum" id="7K2D"/>
<dbReference type="PDBsum" id="7K2E"/>
<dbReference type="PDBsum" id="7K2F"/>
<dbReference type="PDBsum" id="7K2G"/>
<dbReference type="PDBsum" id="7K2H"/>
<dbReference type="PDBsum" id="7K2I"/>
<dbReference type="PDBsum" id="7K2J"/>
<dbReference type="PDBsum" id="7K2K"/>
<dbReference type="PDBsum" id="7K2L"/>
<dbReference type="PDBsum" id="7K2M"/>
<dbReference type="PDBsum" id="7K2N"/>
<dbReference type="PDBsum" id="7K2O"/>
<dbReference type="PDBsum" id="7K2P"/>
<dbReference type="PDBsum" id="7K2Q"/>
<dbReference type="PDBsum" id="7K2R"/>
<dbReference type="PDBsum" id="7K2S"/>
<dbReference type="PDBsum" id="7Q5H"/>
<dbReference type="PDBsum" id="7Q6Q"/>
<dbReference type="PDBsum" id="7Q6S"/>
<dbReference type="PDBsum" id="7Q8R"/>
<dbReference type="PDBsum" id="7Q96"/>
<dbReference type="PDBsum" id="7X4W"/>
<dbReference type="PDBsum" id="7X4X"/>
<dbReference type="PDBsum" id="7XM2"/>
<dbReference type="PDBsum" id="7XM3"/>
<dbReference type="PDBsum" id="7XM4"/>
<dbReference type="PDBsum" id="7XM5"/>
<dbReference type="PDBsum" id="7XOT"/>
<dbReference type="PDBsum" id="8EHV"/>
<dbReference type="PDBsum" id="8EJR"/>
<dbReference type="PDBsum" id="8EJS"/>
<dbReference type="PDBsum" id="8IVG"/>
<dbReference type="PDBsum" id="8IVR"/>
<dbReference type="PDBsum" id="8IXS"/>
<dbReference type="PDBsum" id="8PKS"/>
<dbReference type="PDBsum" id="8PKU"/>
<dbReference type="PDBsum" id="8PKV"/>
<dbReference type="PDBsum" id="8PKW"/>
<dbReference type="PDBsum" id="8PKX"/>
<dbReference type="PDBsum" id="8WFG"/>
<dbReference type="PDBsum" id="8X34"/>
<dbReference type="PDBsum" id="8XGK"/>
<dbReference type="PDBsum" id="8XGV"/>
<dbReference type="PDBsum" id="9DU7"/>
<dbReference type="PDBsum" id="9ETX"/>
<dbReference type="PDBsum" id="9ETY"/>
<dbReference type="BMRB" id="Q14145"/>
<dbReference type="EMDB" id="EMD-21617"/>
<dbReference type="SMR" id="Q14145"/>
<dbReference type="BioGRID" id="115156">
    <property type="interactions" value="359"/>
</dbReference>
<dbReference type="ComplexPortal" id="CPX-8107">
    <property type="entry name" value="CRL3 E3 ubiquitin ligase complex, KEAP1 variant"/>
</dbReference>
<dbReference type="CORUM" id="Q14145"/>
<dbReference type="DIP" id="DIP-42134N"/>
<dbReference type="ELM" id="Q14145"/>
<dbReference type="FunCoup" id="Q14145">
    <property type="interactions" value="673"/>
</dbReference>
<dbReference type="IntAct" id="Q14145">
    <property type="interactions" value="200"/>
</dbReference>
<dbReference type="MINT" id="Q14145"/>
<dbReference type="STRING" id="9606.ENSP00000377245"/>
<dbReference type="BindingDB" id="Q14145"/>
<dbReference type="ChEMBL" id="CHEMBL2069156"/>
<dbReference type="DrugBank" id="DB04339">
    <property type="generic name" value="Carbocisteine"/>
</dbReference>
<dbReference type="DrugBank" id="DB08908">
    <property type="generic name" value="Dimethyl fumarate"/>
</dbReference>
<dbReference type="DrugBank" id="DB12513">
    <property type="generic name" value="Omaveloxolone"/>
</dbReference>
<dbReference type="DrugCentral" id="Q14145"/>
<dbReference type="GuidetoPHARMACOLOGY" id="2757"/>
<dbReference type="GlyCosmos" id="Q14145">
    <property type="glycosylation" value="11 sites, 1 glycan"/>
</dbReference>
<dbReference type="GlyGen" id="Q14145">
    <property type="glycosylation" value="18 sites, 1 O-linked glycan (11 sites)"/>
</dbReference>
<dbReference type="iPTMnet" id="Q14145"/>
<dbReference type="PhosphoSitePlus" id="Q14145"/>
<dbReference type="SwissPalm" id="Q14145"/>
<dbReference type="BioMuta" id="KEAP1"/>
<dbReference type="DMDM" id="146345444"/>
<dbReference type="jPOST" id="Q14145"/>
<dbReference type="MassIVE" id="Q14145"/>
<dbReference type="PaxDb" id="9606-ENSP00000171111"/>
<dbReference type="PeptideAtlas" id="Q14145"/>
<dbReference type="ProteomicsDB" id="59849"/>
<dbReference type="Pumba" id="Q14145"/>
<dbReference type="ABCD" id="Q14145">
    <property type="antibodies" value="8 sequenced antibodies"/>
</dbReference>
<dbReference type="Antibodypedia" id="1418">
    <property type="antibodies" value="708 antibodies from 39 providers"/>
</dbReference>
<dbReference type="DNASU" id="9817"/>
<dbReference type="Ensembl" id="ENST00000171111.10">
    <property type="protein sequence ID" value="ENSP00000171111.4"/>
    <property type="gene ID" value="ENSG00000079999.14"/>
</dbReference>
<dbReference type="Ensembl" id="ENST00000393623.6">
    <property type="protein sequence ID" value="ENSP00000377245.1"/>
    <property type="gene ID" value="ENSG00000079999.14"/>
</dbReference>
<dbReference type="GeneID" id="9817"/>
<dbReference type="KEGG" id="hsa:9817"/>
<dbReference type="MANE-Select" id="ENST00000171111.10">
    <property type="protein sequence ID" value="ENSP00000171111.4"/>
    <property type="RefSeq nucleotide sequence ID" value="NM_203500.2"/>
    <property type="RefSeq protein sequence ID" value="NP_987096.1"/>
</dbReference>
<dbReference type="UCSC" id="uc002moq.2">
    <property type="organism name" value="human"/>
</dbReference>
<dbReference type="AGR" id="HGNC:23177"/>
<dbReference type="CTD" id="9817"/>
<dbReference type="DisGeNET" id="9817"/>
<dbReference type="GeneCards" id="KEAP1"/>
<dbReference type="HGNC" id="HGNC:23177">
    <property type="gene designation" value="KEAP1"/>
</dbReference>
<dbReference type="HPA" id="ENSG00000079999">
    <property type="expression patterns" value="Tissue enhanced (skeletal)"/>
</dbReference>
<dbReference type="MalaCards" id="KEAP1"/>
<dbReference type="MIM" id="606016">
    <property type="type" value="gene"/>
</dbReference>
<dbReference type="neXtProt" id="NX_Q14145"/>
<dbReference type="OpenTargets" id="ENSG00000079999"/>
<dbReference type="Orphanet" id="276399">
    <property type="disease" value="Familial multinodular goiter"/>
</dbReference>
<dbReference type="PharmGKB" id="PA134887774"/>
<dbReference type="VEuPathDB" id="HostDB:ENSG00000079999"/>
<dbReference type="eggNOG" id="KOG4441">
    <property type="taxonomic scope" value="Eukaryota"/>
</dbReference>
<dbReference type="GeneTree" id="ENSGT00940000159543"/>
<dbReference type="HOGENOM" id="CLU_004253_14_2_1"/>
<dbReference type="InParanoid" id="Q14145"/>
<dbReference type="OMA" id="TECLTEY"/>
<dbReference type="OrthoDB" id="45365at2759"/>
<dbReference type="PAN-GO" id="Q14145">
    <property type="GO annotations" value="2 GO annotations based on evolutionary models"/>
</dbReference>
<dbReference type="PhylomeDB" id="Q14145"/>
<dbReference type="TreeFam" id="TF329218"/>
<dbReference type="PathwayCommons" id="Q14145"/>
<dbReference type="Reactome" id="R-HSA-5689880">
    <property type="pathway name" value="Ub-specific processing proteases"/>
</dbReference>
<dbReference type="Reactome" id="R-HSA-8951664">
    <property type="pathway name" value="Neddylation"/>
</dbReference>
<dbReference type="Reactome" id="R-HSA-9679191">
    <property type="pathway name" value="Potential therapeutics for SARS"/>
</dbReference>
<dbReference type="Reactome" id="R-HSA-9755511">
    <property type="pathway name" value="KEAP1-NFE2L2 pathway"/>
</dbReference>
<dbReference type="Reactome" id="R-HSA-9759194">
    <property type="pathway name" value="Nuclear events mediated by NFE2L2"/>
</dbReference>
<dbReference type="Reactome" id="R-HSA-983168">
    <property type="pathway name" value="Antigen processing: Ubiquitination &amp; Proteasome degradation"/>
</dbReference>
<dbReference type="SignaLink" id="Q14145"/>
<dbReference type="SIGNOR" id="Q14145"/>
<dbReference type="UniPathway" id="UPA00143"/>
<dbReference type="BioGRID-ORCS" id="9817">
    <property type="hits" value="194 hits in 1230 CRISPR screens"/>
</dbReference>
<dbReference type="CD-CODE" id="5D6181E1">
    <property type="entry name" value="Synthetic Condensate 000293"/>
</dbReference>
<dbReference type="CD-CODE" id="DEE660B4">
    <property type="entry name" value="Stress granule"/>
</dbReference>
<dbReference type="CD-CODE" id="FBAE0D06">
    <property type="entry name" value="Synthetic Condensate 000291"/>
</dbReference>
<dbReference type="ChiTaRS" id="KEAP1">
    <property type="organism name" value="human"/>
</dbReference>
<dbReference type="EvolutionaryTrace" id="Q14145"/>
<dbReference type="GeneWiki" id="KEAP1"/>
<dbReference type="GenomeRNAi" id="9817"/>
<dbReference type="Pharos" id="Q14145">
    <property type="development level" value="Tclin"/>
</dbReference>
<dbReference type="PRO" id="PR:Q14145"/>
<dbReference type="Proteomes" id="UP000005640">
    <property type="component" value="Chromosome 19"/>
</dbReference>
<dbReference type="RNAct" id="Q14145">
    <property type="molecule type" value="protein"/>
</dbReference>
<dbReference type="Bgee" id="ENSG00000079999">
    <property type="expression patterns" value="Expressed in hindlimb stylopod muscle and 201 other cell types or tissues"/>
</dbReference>
<dbReference type="ExpressionAtlas" id="Q14145">
    <property type="expression patterns" value="baseline and differential"/>
</dbReference>
<dbReference type="GO" id="GO:0005884">
    <property type="term" value="C:actin filament"/>
    <property type="evidence" value="ECO:0007669"/>
    <property type="project" value="Ensembl"/>
</dbReference>
<dbReference type="GO" id="GO:0034451">
    <property type="term" value="C:centriolar satellite"/>
    <property type="evidence" value="ECO:0000314"/>
    <property type="project" value="HPA"/>
</dbReference>
<dbReference type="GO" id="GO:0031463">
    <property type="term" value="C:Cul3-RING ubiquitin ligase complex"/>
    <property type="evidence" value="ECO:0000314"/>
    <property type="project" value="UniProtKB"/>
</dbReference>
<dbReference type="GO" id="GO:0005737">
    <property type="term" value="C:cytoplasm"/>
    <property type="evidence" value="ECO:0000314"/>
    <property type="project" value="UniProtKB"/>
</dbReference>
<dbReference type="GO" id="GO:0005829">
    <property type="term" value="C:cytosol"/>
    <property type="evidence" value="ECO:0000314"/>
    <property type="project" value="HPA"/>
</dbReference>
<dbReference type="GO" id="GO:0005783">
    <property type="term" value="C:endoplasmic reticulum"/>
    <property type="evidence" value="ECO:0007669"/>
    <property type="project" value="Ensembl"/>
</dbReference>
<dbReference type="GO" id="GO:0016234">
    <property type="term" value="C:inclusion body"/>
    <property type="evidence" value="ECO:0000314"/>
    <property type="project" value="UniProtKB"/>
</dbReference>
<dbReference type="GO" id="GO:0030496">
    <property type="term" value="C:midbody"/>
    <property type="evidence" value="ECO:0000314"/>
    <property type="project" value="UniProtKB"/>
</dbReference>
<dbReference type="GO" id="GO:0005654">
    <property type="term" value="C:nucleoplasm"/>
    <property type="evidence" value="ECO:0000314"/>
    <property type="project" value="HPA"/>
</dbReference>
<dbReference type="GO" id="GO:0097718">
    <property type="term" value="F:disordered domain specific binding"/>
    <property type="evidence" value="ECO:0007669"/>
    <property type="project" value="Ensembl"/>
</dbReference>
<dbReference type="GO" id="GO:0042802">
    <property type="term" value="F:identical protein binding"/>
    <property type="evidence" value="ECO:0007669"/>
    <property type="project" value="Ensembl"/>
</dbReference>
<dbReference type="GO" id="GO:0061629">
    <property type="term" value="F:RNA polymerase II-specific DNA-binding transcription factor binding"/>
    <property type="evidence" value="ECO:0000353"/>
    <property type="project" value="ParkinsonsUK-UCL"/>
</dbReference>
<dbReference type="GO" id="GO:0140416">
    <property type="term" value="F:transcription regulator inhibitor activity"/>
    <property type="evidence" value="ECO:0000314"/>
    <property type="project" value="ParkinsonsUK-UCL"/>
</dbReference>
<dbReference type="GO" id="GO:1990756">
    <property type="term" value="F:ubiquitin-like ligase-substrate adaptor activity"/>
    <property type="evidence" value="ECO:0000314"/>
    <property type="project" value="UniProt"/>
</dbReference>
<dbReference type="GO" id="GO:0071353">
    <property type="term" value="P:cellular response to interleukin-4"/>
    <property type="evidence" value="ECO:0007669"/>
    <property type="project" value="Ensembl"/>
</dbReference>
<dbReference type="GO" id="GO:0034599">
    <property type="term" value="P:cellular response to oxidative stress"/>
    <property type="evidence" value="ECO:0000314"/>
    <property type="project" value="UniProtKB"/>
</dbReference>
<dbReference type="GO" id="GO:0001701">
    <property type="term" value="P:in utero embryonic development"/>
    <property type="evidence" value="ECO:0007669"/>
    <property type="project" value="Ensembl"/>
</dbReference>
<dbReference type="GO" id="GO:1902883">
    <property type="term" value="P:negative regulation of response to oxidative stress"/>
    <property type="evidence" value="ECO:0000314"/>
    <property type="project" value="UniProt"/>
</dbReference>
<dbReference type="GO" id="GO:0000122">
    <property type="term" value="P:negative regulation of transcription by RNA polymerase II"/>
    <property type="evidence" value="ECO:0000314"/>
    <property type="project" value="ParkinsonsUK-UCL"/>
</dbReference>
<dbReference type="GO" id="GO:0032436">
    <property type="term" value="P:positive regulation of proteasomal ubiquitin-dependent protein catabolic process"/>
    <property type="evidence" value="ECO:0000304"/>
    <property type="project" value="ParkinsonsUK-UCL"/>
</dbReference>
<dbReference type="GO" id="GO:0043161">
    <property type="term" value="P:proteasome-mediated ubiquitin-dependent protein catabolic process"/>
    <property type="evidence" value="ECO:0000314"/>
    <property type="project" value="UniProt"/>
</dbReference>
<dbReference type="GO" id="GO:0016567">
    <property type="term" value="P:protein ubiquitination"/>
    <property type="evidence" value="ECO:0000314"/>
    <property type="project" value="UniProtKB"/>
</dbReference>
<dbReference type="GO" id="GO:0010506">
    <property type="term" value="P:regulation of autophagy"/>
    <property type="evidence" value="ECO:0000314"/>
    <property type="project" value="UniProtKB"/>
</dbReference>
<dbReference type="GO" id="GO:0045604">
    <property type="term" value="P:regulation of epidermal cell differentiation"/>
    <property type="evidence" value="ECO:0007669"/>
    <property type="project" value="Ensembl"/>
</dbReference>
<dbReference type="GO" id="GO:0006511">
    <property type="term" value="P:ubiquitin-dependent protein catabolic process"/>
    <property type="evidence" value="ECO:0000314"/>
    <property type="project" value="UniProtKB"/>
</dbReference>
<dbReference type="CDD" id="cd18458">
    <property type="entry name" value="BACK_KLHL19_KEAP1"/>
    <property type="match status" value="1"/>
</dbReference>
<dbReference type="CDD" id="cd18248">
    <property type="entry name" value="BTB_POZ_KLHL19_KEAP1"/>
    <property type="match status" value="1"/>
</dbReference>
<dbReference type="FunFam" id="2.120.10.80:FF:000024">
    <property type="entry name" value="Kelch-like ECH-associated protein 1"/>
    <property type="match status" value="1"/>
</dbReference>
<dbReference type="FunFam" id="1.25.40.420:FF:000001">
    <property type="entry name" value="Kelch-like family member 12"/>
    <property type="match status" value="1"/>
</dbReference>
<dbReference type="FunFam" id="3.30.710.10:FF:000001">
    <property type="entry name" value="Kelch-like family member 20"/>
    <property type="match status" value="1"/>
</dbReference>
<dbReference type="Gene3D" id="1.25.40.420">
    <property type="match status" value="1"/>
</dbReference>
<dbReference type="Gene3D" id="2.120.10.80">
    <property type="entry name" value="Kelch-type beta propeller"/>
    <property type="match status" value="1"/>
</dbReference>
<dbReference type="Gene3D" id="3.30.710.10">
    <property type="entry name" value="Potassium Channel Kv1.1, Chain A"/>
    <property type="match status" value="1"/>
</dbReference>
<dbReference type="IDEAL" id="IID00384"/>
<dbReference type="InterPro" id="IPR011705">
    <property type="entry name" value="BACK"/>
</dbReference>
<dbReference type="InterPro" id="IPR017096">
    <property type="entry name" value="BTB-kelch_protein"/>
</dbReference>
<dbReference type="InterPro" id="IPR000210">
    <property type="entry name" value="BTB/POZ_dom"/>
</dbReference>
<dbReference type="InterPro" id="IPR047098">
    <property type="entry name" value="KEAP1_BACK"/>
</dbReference>
<dbReference type="InterPro" id="IPR030563">
    <property type="entry name" value="KEAP1_BTB_POZ_dom"/>
</dbReference>
<dbReference type="InterPro" id="IPR015915">
    <property type="entry name" value="Kelch-typ_b-propeller"/>
</dbReference>
<dbReference type="InterPro" id="IPR006652">
    <property type="entry name" value="Kelch_1"/>
</dbReference>
<dbReference type="InterPro" id="IPR011333">
    <property type="entry name" value="SKP1/BTB/POZ_sf"/>
</dbReference>
<dbReference type="PANTHER" id="PTHR24412">
    <property type="entry name" value="KELCH PROTEIN"/>
    <property type="match status" value="1"/>
</dbReference>
<dbReference type="PANTHER" id="PTHR24412:SF162">
    <property type="entry name" value="KELCH-LIKE ECH-ASSOCIATED PROTEIN 1"/>
    <property type="match status" value="1"/>
</dbReference>
<dbReference type="Pfam" id="PF07707">
    <property type="entry name" value="BACK"/>
    <property type="match status" value="1"/>
</dbReference>
<dbReference type="Pfam" id="PF00651">
    <property type="entry name" value="BTB"/>
    <property type="match status" value="1"/>
</dbReference>
<dbReference type="Pfam" id="PF01344">
    <property type="entry name" value="Kelch_1"/>
    <property type="match status" value="3"/>
</dbReference>
<dbReference type="Pfam" id="PF24681">
    <property type="entry name" value="Kelch_KLHDC2_KLHL20_DRC7"/>
    <property type="match status" value="1"/>
</dbReference>
<dbReference type="PIRSF" id="PIRSF037037">
    <property type="entry name" value="Kelch-like_protein_gigaxonin"/>
    <property type="match status" value="1"/>
</dbReference>
<dbReference type="SMART" id="SM00875">
    <property type="entry name" value="BACK"/>
    <property type="match status" value="1"/>
</dbReference>
<dbReference type="SMART" id="SM00225">
    <property type="entry name" value="BTB"/>
    <property type="match status" value="1"/>
</dbReference>
<dbReference type="SMART" id="SM00612">
    <property type="entry name" value="Kelch"/>
    <property type="match status" value="6"/>
</dbReference>
<dbReference type="SUPFAM" id="SSF117281">
    <property type="entry name" value="Kelch motif"/>
    <property type="match status" value="1"/>
</dbReference>
<dbReference type="SUPFAM" id="SSF54695">
    <property type="entry name" value="POZ domain"/>
    <property type="match status" value="1"/>
</dbReference>
<dbReference type="PROSITE" id="PS50097">
    <property type="entry name" value="BTB"/>
    <property type="match status" value="1"/>
</dbReference>
<keyword id="KW-0002">3D-structure</keyword>
<keyword id="KW-0963">Cytoplasm</keyword>
<keyword id="KW-0945">Host-virus interaction</keyword>
<keyword id="KW-0880">Kelch repeat</keyword>
<keyword id="KW-0539">Nucleus</keyword>
<keyword id="KW-1267">Proteomics identification</keyword>
<keyword id="KW-1185">Reference proteome</keyword>
<keyword id="KW-0677">Repeat</keyword>
<keyword id="KW-0702">S-nitrosylation</keyword>
<keyword id="KW-0832">Ubl conjugation</keyword>
<keyword id="KW-0833">Ubl conjugation pathway</keyword>
<name>KEAP1_HUMAN</name>